<keyword id="KW-0002">3D-structure</keyword>
<keyword id="KW-0007">Acetylation</keyword>
<keyword id="KW-0036">Amyotrophic lateral sclerosis</keyword>
<keyword id="KW-0072">Autophagy</keyword>
<keyword id="KW-0963">Cytoplasm</keyword>
<keyword id="KW-0968">Cytoplasmic vesicle</keyword>
<keyword id="KW-0225">Disease variant</keyword>
<keyword id="KW-0472">Membrane</keyword>
<keyword id="KW-0523">Neurodegeneration</keyword>
<keyword id="KW-0539">Nucleus</keyword>
<keyword id="KW-1267">Proteomics identification</keyword>
<keyword id="KW-1185">Reference proteome</keyword>
<keyword id="KW-0677">Repeat</keyword>
<accession>Q9UHD9</accession>
<accession>O94798</accession>
<accession>Q5D027</accession>
<accession>Q9H3W6</accession>
<accession>Q9HAZ4</accession>
<reference key="1">
    <citation type="journal article" date="2000" name="FEBS Lett.">
        <title>A family of ubiquitin-like proteins binds the ATPase domain of Hsp70-like Stch.</title>
        <authorList>
            <person name="Kaye F.J."/>
            <person name="Modi S."/>
            <person name="Ivanovska I."/>
            <person name="Koonin E.V."/>
            <person name="Thress K."/>
            <person name="Kubo A."/>
            <person name="Kornbluth S."/>
            <person name="Rose M.D."/>
        </authorList>
    </citation>
    <scope>NUCLEOTIDE SEQUENCE [MRNA]</scope>
    <scope>INTERACTION WITH STCH</scope>
    <source>
        <tissue>Lung</tissue>
    </source>
</reference>
<reference key="2">
    <citation type="journal article" date="2000" name="Mol. Cell">
        <title>The hPLIC proteins may provide a link between the ubiquitination machinery and the proteasome.</title>
        <authorList>
            <person name="Kleijnen M.F."/>
            <person name="Shih A.H."/>
            <person name="Zhou P."/>
            <person name="Kumar S."/>
            <person name="Soccio R.E."/>
            <person name="Kedersha N.L."/>
            <person name="Gill G."/>
            <person name="Howley P.M."/>
        </authorList>
    </citation>
    <scope>NUCLEOTIDE SEQUENCE [MRNA]</scope>
    <scope>FUNCTION</scope>
    <scope>SUBCELLULAR LOCATION</scope>
    <scope>INTERACTION WITH THE PROTEASOME AND UBE3A</scope>
    <source>
        <tissue>B-cell</tissue>
    </source>
</reference>
<reference key="3">
    <citation type="journal article" date="2005" name="Nature">
        <title>The DNA sequence of the human X chromosome.</title>
        <authorList>
            <person name="Ross M.T."/>
            <person name="Grafham D.V."/>
            <person name="Coffey A.J."/>
            <person name="Scherer S."/>
            <person name="McLay K."/>
            <person name="Muzny D."/>
            <person name="Platzer M."/>
            <person name="Howell G.R."/>
            <person name="Burrows C."/>
            <person name="Bird C.P."/>
            <person name="Frankish A."/>
            <person name="Lovell F.L."/>
            <person name="Howe K.L."/>
            <person name="Ashurst J.L."/>
            <person name="Fulton R.S."/>
            <person name="Sudbrak R."/>
            <person name="Wen G."/>
            <person name="Jones M.C."/>
            <person name="Hurles M.E."/>
            <person name="Andrews T.D."/>
            <person name="Scott C.E."/>
            <person name="Searle S."/>
            <person name="Ramser J."/>
            <person name="Whittaker A."/>
            <person name="Deadman R."/>
            <person name="Carter N.P."/>
            <person name="Hunt S.E."/>
            <person name="Chen R."/>
            <person name="Cree A."/>
            <person name="Gunaratne P."/>
            <person name="Havlak P."/>
            <person name="Hodgson A."/>
            <person name="Metzker M.L."/>
            <person name="Richards S."/>
            <person name="Scott G."/>
            <person name="Steffen D."/>
            <person name="Sodergren E."/>
            <person name="Wheeler D.A."/>
            <person name="Worley K.C."/>
            <person name="Ainscough R."/>
            <person name="Ambrose K.D."/>
            <person name="Ansari-Lari M.A."/>
            <person name="Aradhya S."/>
            <person name="Ashwell R.I."/>
            <person name="Babbage A.K."/>
            <person name="Bagguley C.L."/>
            <person name="Ballabio A."/>
            <person name="Banerjee R."/>
            <person name="Barker G.E."/>
            <person name="Barlow K.F."/>
            <person name="Barrett I.P."/>
            <person name="Bates K.N."/>
            <person name="Beare D.M."/>
            <person name="Beasley H."/>
            <person name="Beasley O."/>
            <person name="Beck A."/>
            <person name="Bethel G."/>
            <person name="Blechschmidt K."/>
            <person name="Brady N."/>
            <person name="Bray-Allen S."/>
            <person name="Bridgeman A.M."/>
            <person name="Brown A.J."/>
            <person name="Brown M.J."/>
            <person name="Bonnin D."/>
            <person name="Bruford E.A."/>
            <person name="Buhay C."/>
            <person name="Burch P."/>
            <person name="Burford D."/>
            <person name="Burgess J."/>
            <person name="Burrill W."/>
            <person name="Burton J."/>
            <person name="Bye J.M."/>
            <person name="Carder C."/>
            <person name="Carrel L."/>
            <person name="Chako J."/>
            <person name="Chapman J.C."/>
            <person name="Chavez D."/>
            <person name="Chen E."/>
            <person name="Chen G."/>
            <person name="Chen Y."/>
            <person name="Chen Z."/>
            <person name="Chinault C."/>
            <person name="Ciccodicola A."/>
            <person name="Clark S.Y."/>
            <person name="Clarke G."/>
            <person name="Clee C.M."/>
            <person name="Clegg S."/>
            <person name="Clerc-Blankenburg K."/>
            <person name="Clifford K."/>
            <person name="Cobley V."/>
            <person name="Cole C.G."/>
            <person name="Conquer J.S."/>
            <person name="Corby N."/>
            <person name="Connor R.E."/>
            <person name="David R."/>
            <person name="Davies J."/>
            <person name="Davis C."/>
            <person name="Davis J."/>
            <person name="Delgado O."/>
            <person name="Deshazo D."/>
            <person name="Dhami P."/>
            <person name="Ding Y."/>
            <person name="Dinh H."/>
            <person name="Dodsworth S."/>
            <person name="Draper H."/>
            <person name="Dugan-Rocha S."/>
            <person name="Dunham A."/>
            <person name="Dunn M."/>
            <person name="Durbin K.J."/>
            <person name="Dutta I."/>
            <person name="Eades T."/>
            <person name="Ellwood M."/>
            <person name="Emery-Cohen A."/>
            <person name="Errington H."/>
            <person name="Evans K.L."/>
            <person name="Faulkner L."/>
            <person name="Francis F."/>
            <person name="Frankland J."/>
            <person name="Fraser A.E."/>
            <person name="Galgoczy P."/>
            <person name="Gilbert J."/>
            <person name="Gill R."/>
            <person name="Gloeckner G."/>
            <person name="Gregory S.G."/>
            <person name="Gribble S."/>
            <person name="Griffiths C."/>
            <person name="Grocock R."/>
            <person name="Gu Y."/>
            <person name="Gwilliam R."/>
            <person name="Hamilton C."/>
            <person name="Hart E.A."/>
            <person name="Hawes A."/>
            <person name="Heath P.D."/>
            <person name="Heitmann K."/>
            <person name="Hennig S."/>
            <person name="Hernandez J."/>
            <person name="Hinzmann B."/>
            <person name="Ho S."/>
            <person name="Hoffs M."/>
            <person name="Howden P.J."/>
            <person name="Huckle E.J."/>
            <person name="Hume J."/>
            <person name="Hunt P.J."/>
            <person name="Hunt A.R."/>
            <person name="Isherwood J."/>
            <person name="Jacob L."/>
            <person name="Johnson D."/>
            <person name="Jones S."/>
            <person name="de Jong P.J."/>
            <person name="Joseph S.S."/>
            <person name="Keenan S."/>
            <person name="Kelly S."/>
            <person name="Kershaw J.K."/>
            <person name="Khan Z."/>
            <person name="Kioschis P."/>
            <person name="Klages S."/>
            <person name="Knights A.J."/>
            <person name="Kosiura A."/>
            <person name="Kovar-Smith C."/>
            <person name="Laird G.K."/>
            <person name="Langford C."/>
            <person name="Lawlor S."/>
            <person name="Leversha M."/>
            <person name="Lewis L."/>
            <person name="Liu W."/>
            <person name="Lloyd C."/>
            <person name="Lloyd D.M."/>
            <person name="Loulseged H."/>
            <person name="Loveland J.E."/>
            <person name="Lovell J.D."/>
            <person name="Lozado R."/>
            <person name="Lu J."/>
            <person name="Lyne R."/>
            <person name="Ma J."/>
            <person name="Maheshwari M."/>
            <person name="Matthews L.H."/>
            <person name="McDowall J."/>
            <person name="McLaren S."/>
            <person name="McMurray A."/>
            <person name="Meidl P."/>
            <person name="Meitinger T."/>
            <person name="Milne S."/>
            <person name="Miner G."/>
            <person name="Mistry S.L."/>
            <person name="Morgan M."/>
            <person name="Morris S."/>
            <person name="Mueller I."/>
            <person name="Mullikin J.C."/>
            <person name="Nguyen N."/>
            <person name="Nordsiek G."/>
            <person name="Nyakatura G."/>
            <person name="O'dell C.N."/>
            <person name="Okwuonu G."/>
            <person name="Palmer S."/>
            <person name="Pandian R."/>
            <person name="Parker D."/>
            <person name="Parrish J."/>
            <person name="Pasternak S."/>
            <person name="Patel D."/>
            <person name="Pearce A.V."/>
            <person name="Pearson D.M."/>
            <person name="Pelan S.E."/>
            <person name="Perez L."/>
            <person name="Porter K.M."/>
            <person name="Ramsey Y."/>
            <person name="Reichwald K."/>
            <person name="Rhodes S."/>
            <person name="Ridler K.A."/>
            <person name="Schlessinger D."/>
            <person name="Schueler M.G."/>
            <person name="Sehra H.K."/>
            <person name="Shaw-Smith C."/>
            <person name="Shen H."/>
            <person name="Sheridan E.M."/>
            <person name="Shownkeen R."/>
            <person name="Skuce C.D."/>
            <person name="Smith M.L."/>
            <person name="Sotheran E.C."/>
            <person name="Steingruber H.E."/>
            <person name="Steward C.A."/>
            <person name="Storey R."/>
            <person name="Swann R.M."/>
            <person name="Swarbreck D."/>
            <person name="Tabor P.E."/>
            <person name="Taudien S."/>
            <person name="Taylor T."/>
            <person name="Teague B."/>
            <person name="Thomas K."/>
            <person name="Thorpe A."/>
            <person name="Timms K."/>
            <person name="Tracey A."/>
            <person name="Trevanion S."/>
            <person name="Tromans A.C."/>
            <person name="d'Urso M."/>
            <person name="Verduzco D."/>
            <person name="Villasana D."/>
            <person name="Waldron L."/>
            <person name="Wall M."/>
            <person name="Wang Q."/>
            <person name="Warren J."/>
            <person name="Warry G.L."/>
            <person name="Wei X."/>
            <person name="West A."/>
            <person name="Whitehead S.L."/>
            <person name="Whiteley M.N."/>
            <person name="Wilkinson J.E."/>
            <person name="Willey D.L."/>
            <person name="Williams G."/>
            <person name="Williams L."/>
            <person name="Williamson A."/>
            <person name="Williamson H."/>
            <person name="Wilming L."/>
            <person name="Woodmansey R.L."/>
            <person name="Wray P.W."/>
            <person name="Yen J."/>
            <person name="Zhang J."/>
            <person name="Zhou J."/>
            <person name="Zoghbi H."/>
            <person name="Zorilla S."/>
            <person name="Buck D."/>
            <person name="Reinhardt R."/>
            <person name="Poustka A."/>
            <person name="Rosenthal A."/>
            <person name="Lehrach H."/>
            <person name="Meindl A."/>
            <person name="Minx P.J."/>
            <person name="Hillier L.W."/>
            <person name="Willard H.F."/>
            <person name="Wilson R.K."/>
            <person name="Waterston R.H."/>
            <person name="Rice C.M."/>
            <person name="Vaudin M."/>
            <person name="Coulson A."/>
            <person name="Nelson D.L."/>
            <person name="Weinstock G."/>
            <person name="Sulston J.E."/>
            <person name="Durbin R.M."/>
            <person name="Hubbard T."/>
            <person name="Gibbs R.A."/>
            <person name="Beck S."/>
            <person name="Rogers J."/>
            <person name="Bentley D.R."/>
        </authorList>
    </citation>
    <scope>NUCLEOTIDE SEQUENCE [LARGE SCALE GENOMIC DNA]</scope>
</reference>
<reference key="4">
    <citation type="submission" date="2005-07" db="EMBL/GenBank/DDBJ databases">
        <authorList>
            <person name="Mural R.J."/>
            <person name="Istrail S."/>
            <person name="Sutton G.G."/>
            <person name="Florea L."/>
            <person name="Halpern A.L."/>
            <person name="Mobarry C.M."/>
            <person name="Lippert R."/>
            <person name="Walenz B."/>
            <person name="Shatkay H."/>
            <person name="Dew I."/>
            <person name="Miller J.R."/>
            <person name="Flanigan M.J."/>
            <person name="Edwards N.J."/>
            <person name="Bolanos R."/>
            <person name="Fasulo D."/>
            <person name="Halldorsson B.V."/>
            <person name="Hannenhalli S."/>
            <person name="Turner R."/>
            <person name="Yooseph S."/>
            <person name="Lu F."/>
            <person name="Nusskern D.R."/>
            <person name="Shue B.C."/>
            <person name="Zheng X.H."/>
            <person name="Zhong F."/>
            <person name="Delcher A.L."/>
            <person name="Huson D.H."/>
            <person name="Kravitz S.A."/>
            <person name="Mouchard L."/>
            <person name="Reinert K."/>
            <person name="Remington K.A."/>
            <person name="Clark A.G."/>
            <person name="Waterman M.S."/>
            <person name="Eichler E.E."/>
            <person name="Adams M.D."/>
            <person name="Hunkapiller M.W."/>
            <person name="Myers E.W."/>
            <person name="Venter J.C."/>
        </authorList>
    </citation>
    <scope>NUCLEOTIDE SEQUENCE [LARGE SCALE GENOMIC DNA]</scope>
</reference>
<reference key="5">
    <citation type="journal article" date="2004" name="Genome Res.">
        <title>The status, quality, and expansion of the NIH full-length cDNA project: the Mammalian Gene Collection (MGC).</title>
        <authorList>
            <consortium name="The MGC Project Team"/>
        </authorList>
    </citation>
    <scope>NUCLEOTIDE SEQUENCE [LARGE SCALE MRNA]</scope>
    <source>
        <tissue>Placenta</tissue>
    </source>
</reference>
<reference key="6">
    <citation type="journal article" date="2007" name="BMC Genomics">
        <title>The full-ORF clone resource of the German cDNA consortium.</title>
        <authorList>
            <person name="Bechtel S."/>
            <person name="Rosenfelder H."/>
            <person name="Duda A."/>
            <person name="Schmidt C.P."/>
            <person name="Ernst U."/>
            <person name="Wellenreuther R."/>
            <person name="Mehrle A."/>
            <person name="Schuster C."/>
            <person name="Bahr A."/>
            <person name="Bloecker H."/>
            <person name="Heubner D."/>
            <person name="Hoerlein A."/>
            <person name="Michel G."/>
            <person name="Wedler H."/>
            <person name="Koehrer K."/>
            <person name="Ottenwaelder B."/>
            <person name="Poustka A."/>
            <person name="Wiemann S."/>
            <person name="Schupp I."/>
        </authorList>
    </citation>
    <scope>NUCLEOTIDE SEQUENCE [LARGE SCALE MRNA] OF 37-624</scope>
    <source>
        <tissue>Amygdala</tissue>
    </source>
</reference>
<reference key="7">
    <citation type="journal article" date="1998" name="Nat. Biotechnol.">
        <title>Selection system for genes encoding nuclear-targeted proteins.</title>
        <authorList>
            <person name="Ueki N."/>
            <person name="Oda T."/>
            <person name="Kondo M."/>
            <person name="Yano K."/>
            <person name="Noguchi T."/>
            <person name="Muramatsu M.-A."/>
        </authorList>
    </citation>
    <scope>NUCLEOTIDE SEQUENCE [LARGE SCALE MRNA] OF 217-624</scope>
    <scope>SUBCELLULAR LOCATION</scope>
    <source>
        <tissue>Fetal brain</tissue>
    </source>
</reference>
<reference key="8">
    <citation type="journal article" date="2006" name="Biochem. J.">
        <title>Dimerization of ubiquilin is dependent upon the central region of the protein: evidence that the monomer, but not the dimer, is involved in binding presenilins.</title>
        <authorList>
            <person name="Ford D.L."/>
            <person name="Monteiro M.J."/>
        </authorList>
    </citation>
    <scope>SUBUNIT</scope>
    <scope>HETERODIMERIZATION WITH UBQLN1</scope>
</reference>
<reference key="9">
    <citation type="journal article" date="2007" name="J. Mol. Biol.">
        <title>Ubiquitin receptor proteins hHR23a and hPLIC2 interact.</title>
        <authorList>
            <person name="Kang Y."/>
            <person name="Zhang N."/>
            <person name="Koepp D.M."/>
            <person name="Walters K.J."/>
        </authorList>
    </citation>
    <scope>INTERACTION WITH RAD23A</scope>
</reference>
<reference key="10">
    <citation type="journal article" date="2008" name="Biochem. Biophys. Res. Commun.">
        <title>Herp enhances ER-associated protein degradation by recruiting ubiquilins.</title>
        <authorList>
            <person name="Kim T.Y."/>
            <person name="Kim E."/>
            <person name="Yoon S.K."/>
            <person name="Yoon J.B."/>
        </authorList>
    </citation>
    <scope>FUNCTION</scope>
    <scope>INTERACTION WITH HERPUD1</scope>
</reference>
<reference key="11">
    <citation type="journal article" date="2008" name="Mol. Biol. Cell">
        <title>The ubiquitin-like protein PLIC-2 is a negative regulator of G protein-coupled receptor endocytosis.</title>
        <authorList>
            <person name="N'Diaye E.N."/>
            <person name="Hanyaloglu A.C."/>
            <person name="Kajihara K.K."/>
            <person name="Puthenveedu M.A."/>
            <person name="Wu P."/>
            <person name="von Zastrow M."/>
            <person name="Brown E.J."/>
        </authorList>
    </citation>
    <scope>FUNCTION</scope>
    <scope>SUBCELLULAR LOCATION</scope>
    <scope>DOMAIN UBIQUITIN-LIKE</scope>
    <scope>INTERACTION WITH EPS15; EPN1 AND EPN2</scope>
</reference>
<reference key="12">
    <citation type="journal article" date="2009" name="Anal. Chem.">
        <title>Lys-N and trypsin cover complementary parts of the phosphoproteome in a refined SCX-based approach.</title>
        <authorList>
            <person name="Gauci S."/>
            <person name="Helbig A.O."/>
            <person name="Slijper M."/>
            <person name="Krijgsveld J."/>
            <person name="Heck A.J."/>
            <person name="Mohammed S."/>
        </authorList>
    </citation>
    <scope>ACETYLATION [LARGE SCALE ANALYSIS] AT ALA-2</scope>
    <scope>CLEAVAGE OF INITIATOR METHIONINE [LARGE SCALE ANALYSIS]</scope>
    <scope>IDENTIFICATION BY MASS SPECTROMETRY [LARGE SCALE ANALYSIS]</scope>
</reference>
<reference key="13">
    <citation type="journal article" date="2009" name="EMBO Rep.">
        <title>PLIC proteins or ubiquilins regulate autophagy-dependent cell survival during nutrient starvation.</title>
        <authorList>
            <person name="N'Diaye E.N."/>
            <person name="Kajihara K.K."/>
            <person name="Hsieh I."/>
            <person name="Morisaki H."/>
            <person name="Debnath J."/>
            <person name="Brown E.J."/>
        </authorList>
    </citation>
    <scope>FUNCTION</scope>
    <scope>SUBCELLULAR LOCATION</scope>
    <scope>DOMAIN UBA</scope>
</reference>
<reference key="14">
    <citation type="journal article" date="2010" name="Autophagy">
        <title>Ubiquilin at a crossroads in protein degradation pathways.</title>
        <authorList>
            <person name="Rothenberg C."/>
            <person name="Monteiro M.J."/>
        </authorList>
    </citation>
    <scope>REVIEW</scope>
</reference>
<reference key="15">
    <citation type="journal article" date="2010" name="Hum. Mol. Genet.">
        <title>Ubiquilin functions in autophagy and is degraded by chaperone-mediated autophagy.</title>
        <authorList>
            <person name="Rothenberg C."/>
            <person name="Srinivasan D."/>
            <person name="Mah L."/>
            <person name="Kaushik S."/>
            <person name="Peterhoff C.M."/>
            <person name="Ugolino J."/>
            <person name="Fang S."/>
            <person name="Cuervo A.M."/>
            <person name="Nixon R.A."/>
            <person name="Monteiro M.J."/>
        </authorList>
    </citation>
    <scope>FUNCTION</scope>
    <scope>IDENTIFICATION IN A COMPLEX WITH UBQLN1 AND MAP1LC3A/B/C</scope>
    <scope>PROTEOLYTIC DEGRADATION</scope>
</reference>
<reference key="16">
    <citation type="journal article" date="2011" name="BMC Syst. Biol.">
        <title>Initial characterization of the human central proteome.</title>
        <authorList>
            <person name="Burkard T.R."/>
            <person name="Planyavsky M."/>
            <person name="Kaupe I."/>
            <person name="Breitwieser F.P."/>
            <person name="Buerckstuemmer T."/>
            <person name="Bennett K.L."/>
            <person name="Superti-Furga G."/>
            <person name="Colinge J."/>
        </authorList>
    </citation>
    <scope>IDENTIFICATION BY MASS SPECTROMETRY [LARGE SCALE ANALYSIS]</scope>
</reference>
<reference key="17">
    <citation type="journal article" date="2012" name="Biol. Chem.">
        <title>Ubiquilins in the crosstalk among proteolytic pathways.</title>
        <authorList>
            <person name="Lee D.Y."/>
            <person name="Brown E.J."/>
        </authorList>
    </citation>
    <scope>REVIEW</scope>
</reference>
<reference key="18">
    <citation type="journal article" date="2012" name="Proc. Natl. Acad. Sci. U.S.A.">
        <title>N-terminal acetylome analyses and functional insights of the N-terminal acetyltransferase NatB.</title>
        <authorList>
            <person name="Van Damme P."/>
            <person name="Lasa M."/>
            <person name="Polevoda B."/>
            <person name="Gazquez C."/>
            <person name="Elosegui-Artola A."/>
            <person name="Kim D.S."/>
            <person name="De Juan-Pardo E."/>
            <person name="Demeyer K."/>
            <person name="Hole K."/>
            <person name="Larrea E."/>
            <person name="Timmerman E."/>
            <person name="Prieto J."/>
            <person name="Arnesen T."/>
            <person name="Sherman F."/>
            <person name="Gevaert K."/>
            <person name="Aldabe R."/>
        </authorList>
    </citation>
    <scope>ACETYLATION [LARGE SCALE ANALYSIS] AT ALA-2</scope>
    <scope>CLEAVAGE OF INITIATOR METHIONINE [LARGE SCALE ANALYSIS]</scope>
    <scope>IDENTIFICATION BY MASS SPECTROMETRY [LARGE SCALE ANALYSIS]</scope>
</reference>
<reference key="19">
    <citation type="journal article" date="2013" name="Biochim. Biophys. Acta">
        <title>Ubiquilin-2 (UBQLN2) binds with high affinity to the C-terminal region of TDP-43 and modulates TDP-43 levels in H4 cells: characterization of inhibition by nucleic acids and 4-aminoquinolines.</title>
        <authorList>
            <person name="Cassel J.A."/>
            <person name="Reitz A.B."/>
        </authorList>
    </citation>
    <scope>INTERACTION WITH TARDBP</scope>
</reference>
<reference key="20">
    <citation type="journal article" date="2013" name="EMBO Rep.">
        <title>Ubiquilin4 is an adaptor protein that recruits Ubiquilin1 to the autophagy machinery.</title>
        <authorList>
            <person name="Lee D.Y."/>
            <person name="Arnott D."/>
            <person name="Brown E.J."/>
        </authorList>
    </citation>
    <scope>INTERACTION WITH UBQLN4</scope>
</reference>
<reference key="21">
    <citation type="journal article" date="2014" name="BMC Evol. Biol.">
        <title>The ubiquilin gene family: evolutionary patterns and functional insights.</title>
        <authorList>
            <person name="Marin I."/>
        </authorList>
    </citation>
    <scope>REVIEW</scope>
</reference>
<reference key="22">
    <citation type="journal article" date="2014" name="Hum. Mol. Genet.">
        <title>C9ORF72, implicated in amytrophic lateral sclerosis and frontotemporal dementia, regulates endosomal trafficking.</title>
        <authorList>
            <person name="Farg M.A."/>
            <person name="Sundaramoorthy V."/>
            <person name="Sultana J.M."/>
            <person name="Yang S."/>
            <person name="Atkinson R.A."/>
            <person name="Levina V."/>
            <person name="Halloran M.A."/>
            <person name="Gleeson P.A."/>
            <person name="Blair I.P."/>
            <person name="Soo K.Y."/>
            <person name="King A.E."/>
            <person name="Atkin J.D."/>
        </authorList>
    </citation>
    <scope>INTERACTION WITH C9ORF72</scope>
</reference>
<reference key="23">
    <citation type="journal article" date="2014" name="Int. J. Biochem. Cell Biol.">
        <title>Ubiquilin 2: a component of the ubiquitin-proteasome system with an emerging role in neurodegeneration.</title>
        <authorList>
            <person name="Zhang K.Y."/>
            <person name="Yang S."/>
            <person name="Warraich S.T."/>
            <person name="Blair I.P."/>
        </authorList>
    </citation>
    <scope>REVIEW</scope>
</reference>
<reference key="24">
    <citation type="journal article" date="2014" name="J. Neurochem.">
        <title>Pathogenic mutation of UBQLN2 impairs its interaction with UBXD8 and disrupts endoplasmic reticulum-associated protein degradation.</title>
        <authorList>
            <person name="Xia Y."/>
            <person name="Yan L.H."/>
            <person name="Huang B."/>
            <person name="Liu M."/>
            <person name="Liu X."/>
            <person name="Huang C."/>
        </authorList>
    </citation>
    <scope>FUNCTION</scope>
    <scope>INTERACTION WITH FAF2</scope>
    <scope>CHARACTERIZATION OF VARIANT ALS15 HIS-497</scope>
</reference>
<reference key="25">
    <citation type="journal article" date="2002" name="Biochemistry">
        <title>Structural studies of the interaction between ubiquitin family proteins and proteasome subunit S5a.</title>
        <authorList>
            <person name="Walters K.J."/>
            <person name="Kleijnen M.F."/>
            <person name="Goh A.M."/>
            <person name="Wagner G."/>
            <person name="Howley P.M."/>
        </authorList>
    </citation>
    <scope>STRUCTURE BY NMR OF 1-103</scope>
</reference>
<reference key="26">
    <citation type="journal article" date="2011" name="Nature">
        <title>Mutations in UBQLN2 cause dominant X-linked juvenile and adult-onset ALS and ALS/dementia.</title>
        <authorList>
            <person name="Deng H.X."/>
            <person name="Chen W."/>
            <person name="Hong S.T."/>
            <person name="Boycott K.M."/>
            <person name="Gorrie G.H."/>
            <person name="Siddique N."/>
            <person name="Yang Y."/>
            <person name="Fecto F."/>
            <person name="Shi Y."/>
            <person name="Zhai H."/>
            <person name="Jiang H."/>
            <person name="Hirano M."/>
            <person name="Rampersaud E."/>
            <person name="Jansen G.H."/>
            <person name="Donkervoort S."/>
            <person name="Bigio E.H."/>
            <person name="Brooks B.R."/>
            <person name="Ajroud K."/>
            <person name="Sufit R.L."/>
            <person name="Haines J.L."/>
            <person name="Mugnaini E."/>
            <person name="Pericak-Vance M.A."/>
            <person name="Siddique T."/>
        </authorList>
    </citation>
    <scope>VARIANTS ALS15 HIS-497; SER-497; THR-506; SER-509 AND SER-525</scope>
    <scope>CHARACTERIZATION OF VARIANTS ALS15 HIS-497 AND THR-506</scope>
</reference>
<reference key="27">
    <citation type="journal article" date="2012" name="Neurobiol. Aging">
        <title>Screening in ALS and FTD patients reveals 3 novel UBQLN2 mutations outside the PXX domain and a pure FTD phenotype.</title>
        <authorList>
            <person name="Synofzik M."/>
            <person name="Maetzler W."/>
            <person name="Grehl T."/>
            <person name="Prudlo J."/>
            <person name="Vom Hagen J.M."/>
            <person name="Haack T."/>
            <person name="Rebassoo P."/>
            <person name="Munz M."/>
            <person name="Schols L."/>
            <person name="Biskup S."/>
        </authorList>
    </citation>
    <scope>VARIANTS ALS15 THR-283 AND ARG-425</scope>
    <scope>VARIANT VAL-282</scope>
</reference>
<reference key="28">
    <citation type="journal article" date="2012" name="Neurobiol. Aging">
        <title>UBQLN2/ubiquilin 2 mutation and pathology in familial amyotrophic lateral sclerosis.</title>
        <authorList>
            <person name="Williams K.L."/>
            <person name="Warraich S.T."/>
            <person name="Yang S."/>
            <person name="Solski J.A."/>
            <person name="Fernando R."/>
            <person name="Rouleau G.A."/>
            <person name="Nicholson G.A."/>
            <person name="Blair I.P."/>
        </authorList>
    </citation>
    <scope>VARIANT ALS15 ILE-487</scope>
</reference>
<reference key="29">
    <citation type="journal article" date="2012" name="Neurobiol. Aging">
        <title>UBQLN2 mutations are rare in French and French-Canadian amyotrophic lateral sclerosis.</title>
        <authorList>
            <person name="Daoud H."/>
            <person name="Suhail H."/>
            <person name="Szuto A."/>
            <person name="Camu W."/>
            <person name="Salachas F."/>
            <person name="Meininger V."/>
            <person name="Bouchard J.P."/>
            <person name="Dupre N."/>
            <person name="Dion P.A."/>
            <person name="Rouleau G.A."/>
        </authorList>
    </citation>
    <scope>VARIANTS ALS15 ASN-155 AND THR-189</scope>
</reference>
<reference key="30">
    <citation type="journal article" date="2015" name="Hum. Mol. Genet.">
        <title>ALS-linked mutations in ubiquilin-2 or hnRNPA1 reduce interaction between ubiquilin-2 and hnRNPA1.</title>
        <authorList>
            <person name="Gilpin K.M."/>
            <person name="Chang L."/>
            <person name="Monteiro M.J."/>
        </authorList>
    </citation>
    <scope>INTERACTION WITH HNRNPA1 AND HNRNPU</scope>
    <scope>CHARACTERIZATION OF VARIANTS ALS15 HIS-497; SER-497; THR-506; SER-509 AND SER-525</scope>
</reference>
<dbReference type="EMBL" id="AF189009">
    <property type="protein sequence ID" value="AAF17237.1"/>
    <property type="molecule type" value="mRNA"/>
</dbReference>
<dbReference type="EMBL" id="AF293385">
    <property type="protein sequence ID" value="AAG02474.1"/>
    <property type="molecule type" value="mRNA"/>
</dbReference>
<dbReference type="EMBL" id="AL354793">
    <property type="status" value="NOT_ANNOTATED_CDS"/>
    <property type="molecule type" value="Genomic_DNA"/>
</dbReference>
<dbReference type="EMBL" id="CH471154">
    <property type="protein sequence ID" value="EAW93233.1"/>
    <property type="molecule type" value="Genomic_DNA"/>
</dbReference>
<dbReference type="EMBL" id="BC069237">
    <property type="protein sequence ID" value="AAH69237.1"/>
    <property type="molecule type" value="mRNA"/>
</dbReference>
<dbReference type="EMBL" id="AL442081">
    <property type="protein sequence ID" value="CAC09446.1"/>
    <property type="molecule type" value="mRNA"/>
</dbReference>
<dbReference type="EMBL" id="AB015344">
    <property type="protein sequence ID" value="BAA34801.1"/>
    <property type="molecule type" value="mRNA"/>
</dbReference>
<dbReference type="CCDS" id="CCDS14374.1"/>
<dbReference type="RefSeq" id="NP_038472.2">
    <property type="nucleotide sequence ID" value="NM_013444.3"/>
</dbReference>
<dbReference type="PDB" id="1J8C">
    <property type="method" value="NMR"/>
    <property type="chains" value="A=1-103"/>
</dbReference>
<dbReference type="PDB" id="2NBV">
    <property type="method" value="NMR"/>
    <property type="chains" value="B=26-103"/>
</dbReference>
<dbReference type="PDB" id="6MUN">
    <property type="method" value="NMR"/>
    <property type="chains" value="B/C=26-103"/>
</dbReference>
<dbReference type="PDB" id="7F7X">
    <property type="method" value="NMR"/>
    <property type="chains" value="B=578-621"/>
</dbReference>
<dbReference type="PDBsum" id="1J8C"/>
<dbReference type="PDBsum" id="2NBV"/>
<dbReference type="PDBsum" id="6MUN"/>
<dbReference type="PDBsum" id="7F7X"/>
<dbReference type="SASBDB" id="Q9UHD9"/>
<dbReference type="SMR" id="Q9UHD9"/>
<dbReference type="BioGRID" id="119006">
    <property type="interactions" value="811"/>
</dbReference>
<dbReference type="CORUM" id="Q9UHD9"/>
<dbReference type="DIP" id="DIP-42116N"/>
<dbReference type="FunCoup" id="Q9UHD9">
    <property type="interactions" value="3135"/>
</dbReference>
<dbReference type="IntAct" id="Q9UHD9">
    <property type="interactions" value="280"/>
</dbReference>
<dbReference type="MINT" id="Q9UHD9"/>
<dbReference type="STRING" id="9606.ENSP00000345195"/>
<dbReference type="MoonDB" id="Q9UHD9">
    <property type="type" value="Predicted"/>
</dbReference>
<dbReference type="GlyCosmos" id="Q9UHD9">
    <property type="glycosylation" value="20 sites, 2 glycans"/>
</dbReference>
<dbReference type="GlyGen" id="Q9UHD9">
    <property type="glycosylation" value="22 sites, 2 O-linked glycans (20 sites)"/>
</dbReference>
<dbReference type="iPTMnet" id="Q9UHD9"/>
<dbReference type="MetOSite" id="Q9UHD9"/>
<dbReference type="PhosphoSitePlus" id="Q9UHD9"/>
<dbReference type="SwissPalm" id="Q9UHD9"/>
<dbReference type="BioMuta" id="UBQLN2"/>
<dbReference type="DMDM" id="124056593"/>
<dbReference type="jPOST" id="Q9UHD9"/>
<dbReference type="MassIVE" id="Q9UHD9"/>
<dbReference type="PaxDb" id="9606-ENSP00000345195"/>
<dbReference type="PeptideAtlas" id="Q9UHD9"/>
<dbReference type="ProteomicsDB" id="84333"/>
<dbReference type="Pumba" id="Q9UHD9"/>
<dbReference type="ABCD" id="Q9UHD9">
    <property type="antibodies" value="1 sequenced antibody"/>
</dbReference>
<dbReference type="Antibodypedia" id="570">
    <property type="antibodies" value="300 antibodies from 33 providers"/>
</dbReference>
<dbReference type="DNASU" id="29978"/>
<dbReference type="YCharOS" id="Q9UHD9">
    <property type="antibodies" value="Tested 10 antibodies from 8 manufacturers"/>
</dbReference>
<dbReference type="Ensembl" id="ENST00000338222.7">
    <property type="protein sequence ID" value="ENSP00000345195.5"/>
    <property type="gene ID" value="ENSG00000188021.9"/>
</dbReference>
<dbReference type="GeneID" id="29978"/>
<dbReference type="KEGG" id="hsa:29978"/>
<dbReference type="MANE-Select" id="ENST00000338222.7">
    <property type="protein sequence ID" value="ENSP00000345195.5"/>
    <property type="RefSeq nucleotide sequence ID" value="NM_013444.4"/>
    <property type="RefSeq protein sequence ID" value="NP_038472.2"/>
</dbReference>
<dbReference type="UCSC" id="uc004dus.4">
    <property type="organism name" value="human"/>
</dbReference>
<dbReference type="AGR" id="HGNC:12509"/>
<dbReference type="CTD" id="29978"/>
<dbReference type="DisGeNET" id="29978"/>
<dbReference type="GeneCards" id="UBQLN2"/>
<dbReference type="HGNC" id="HGNC:12509">
    <property type="gene designation" value="UBQLN2"/>
</dbReference>
<dbReference type="HPA" id="ENSG00000188021">
    <property type="expression patterns" value="Low tissue specificity"/>
</dbReference>
<dbReference type="MalaCards" id="UBQLN2"/>
<dbReference type="MIM" id="300264">
    <property type="type" value="gene"/>
</dbReference>
<dbReference type="MIM" id="300857">
    <property type="type" value="phenotype"/>
</dbReference>
<dbReference type="neXtProt" id="NX_Q9UHD9"/>
<dbReference type="OpenTargets" id="ENSG00000188021"/>
<dbReference type="Orphanet" id="803">
    <property type="disease" value="Amyotrophic lateral sclerosis"/>
</dbReference>
<dbReference type="PharmGKB" id="PA37156"/>
<dbReference type="VEuPathDB" id="HostDB:ENSG00000188021"/>
<dbReference type="eggNOG" id="KOG0010">
    <property type="taxonomic scope" value="Eukaryota"/>
</dbReference>
<dbReference type="GeneTree" id="ENSGT00940000162603"/>
<dbReference type="HOGENOM" id="CLU_024293_4_0_1"/>
<dbReference type="InParanoid" id="Q9UHD9"/>
<dbReference type="OMA" id="MDNPITQ"/>
<dbReference type="OrthoDB" id="9450922at2759"/>
<dbReference type="PAN-GO" id="Q9UHD9">
    <property type="GO annotations" value="5 GO annotations based on evolutionary models"/>
</dbReference>
<dbReference type="PhylomeDB" id="Q9UHD9"/>
<dbReference type="TreeFam" id="TF314412"/>
<dbReference type="PathwayCommons" id="Q9UHD9"/>
<dbReference type="Reactome" id="R-HSA-8856825">
    <property type="pathway name" value="Cargo recognition for clathrin-mediated endocytosis"/>
</dbReference>
<dbReference type="SignaLink" id="Q9UHD9"/>
<dbReference type="SIGNOR" id="Q9UHD9"/>
<dbReference type="BioGRID-ORCS" id="29978">
    <property type="hits" value="9 hits in 779 CRISPR screens"/>
</dbReference>
<dbReference type="CD-CODE" id="075799D7">
    <property type="entry name" value="Synthetic Condensate 000085"/>
</dbReference>
<dbReference type="CD-CODE" id="139BF52E">
    <property type="entry name" value="Synthetic Condensate 000072"/>
</dbReference>
<dbReference type="CD-CODE" id="95FADA74">
    <property type="entry name" value="Synthetic Condensate 000026"/>
</dbReference>
<dbReference type="CD-CODE" id="9B5E283A">
    <property type="entry name" value="Synthetic Condensate 000373"/>
</dbReference>
<dbReference type="CD-CODE" id="DEE660B4">
    <property type="entry name" value="Stress granule"/>
</dbReference>
<dbReference type="CD-CODE" id="EB3EADD3">
    <property type="entry name" value="Ubqln puncta"/>
</dbReference>
<dbReference type="ChiTaRS" id="UBQLN2">
    <property type="organism name" value="human"/>
</dbReference>
<dbReference type="EvolutionaryTrace" id="Q9UHD9"/>
<dbReference type="GeneWiki" id="UBQLN2"/>
<dbReference type="GenomeRNAi" id="29978"/>
<dbReference type="Pharos" id="Q9UHD9">
    <property type="development level" value="Tbio"/>
</dbReference>
<dbReference type="PRO" id="PR:Q9UHD9"/>
<dbReference type="Proteomes" id="UP000005640">
    <property type="component" value="Chromosome X"/>
</dbReference>
<dbReference type="RNAct" id="Q9UHD9">
    <property type="molecule type" value="protein"/>
</dbReference>
<dbReference type="Bgee" id="ENSG00000188021">
    <property type="expression patterns" value="Expressed in cerebellar vermis and 219 other cell types or tissues"/>
</dbReference>
<dbReference type="GO" id="GO:0005776">
    <property type="term" value="C:autophagosome"/>
    <property type="evidence" value="ECO:0007669"/>
    <property type="project" value="UniProtKB-SubCell"/>
</dbReference>
<dbReference type="GO" id="GO:0005737">
    <property type="term" value="C:cytoplasm"/>
    <property type="evidence" value="ECO:0000314"/>
    <property type="project" value="UniProtKB"/>
</dbReference>
<dbReference type="GO" id="GO:0031410">
    <property type="term" value="C:cytoplasmic vesicle"/>
    <property type="evidence" value="ECO:0007669"/>
    <property type="project" value="UniProtKB-KW"/>
</dbReference>
<dbReference type="GO" id="GO:0005829">
    <property type="term" value="C:cytosol"/>
    <property type="evidence" value="ECO:0000314"/>
    <property type="project" value="HPA"/>
</dbReference>
<dbReference type="GO" id="GO:0005634">
    <property type="term" value="C:nucleus"/>
    <property type="evidence" value="ECO:0007669"/>
    <property type="project" value="UniProtKB-SubCell"/>
</dbReference>
<dbReference type="GO" id="GO:0005886">
    <property type="term" value="C:plasma membrane"/>
    <property type="evidence" value="ECO:0000314"/>
    <property type="project" value="HPA"/>
</dbReference>
<dbReference type="GO" id="GO:0042802">
    <property type="term" value="F:identical protein binding"/>
    <property type="evidence" value="ECO:0000353"/>
    <property type="project" value="IntAct"/>
</dbReference>
<dbReference type="GO" id="GO:0140693">
    <property type="term" value="F:molecular condensate scaffold activity"/>
    <property type="evidence" value="ECO:0000314"/>
    <property type="project" value="DisProt"/>
</dbReference>
<dbReference type="GO" id="GO:0031593">
    <property type="term" value="F:polyubiquitin modification-dependent protein binding"/>
    <property type="evidence" value="ECO:0000318"/>
    <property type="project" value="GO_Central"/>
</dbReference>
<dbReference type="GO" id="GO:0000045">
    <property type="term" value="P:autophagosome assembly"/>
    <property type="evidence" value="ECO:0000318"/>
    <property type="project" value="GO_Central"/>
</dbReference>
<dbReference type="GO" id="GO:0036503">
    <property type="term" value="P:ERAD pathway"/>
    <property type="evidence" value="ECO:0000315"/>
    <property type="project" value="UniProtKB"/>
</dbReference>
<dbReference type="GO" id="GO:1900186">
    <property type="term" value="P:negative regulation of clathrin-dependent endocytosis"/>
    <property type="evidence" value="ECO:0000315"/>
    <property type="project" value="UniProtKB"/>
</dbReference>
<dbReference type="GO" id="GO:1904021">
    <property type="term" value="P:negative regulation of G protein-coupled receptor internalization"/>
    <property type="evidence" value="ECO:0000315"/>
    <property type="project" value="UniProtKB"/>
</dbReference>
<dbReference type="GO" id="GO:1904294">
    <property type="term" value="P:positive regulation of ERAD pathway"/>
    <property type="evidence" value="ECO:0000315"/>
    <property type="project" value="UniProtKB"/>
</dbReference>
<dbReference type="GO" id="GO:2000785">
    <property type="term" value="P:regulation of autophagosome assembly"/>
    <property type="evidence" value="ECO:0000315"/>
    <property type="project" value="UniProtKB"/>
</dbReference>
<dbReference type="GO" id="GO:0016241">
    <property type="term" value="P:regulation of macroautophagy"/>
    <property type="evidence" value="ECO:0000315"/>
    <property type="project" value="UniProtKB"/>
</dbReference>
<dbReference type="GO" id="GO:0006511">
    <property type="term" value="P:ubiquitin-dependent protein catabolic process"/>
    <property type="evidence" value="ECO:0000318"/>
    <property type="project" value="GO_Central"/>
</dbReference>
<dbReference type="CDD" id="cd14399">
    <property type="entry name" value="UBA_PLICs"/>
    <property type="match status" value="1"/>
</dbReference>
<dbReference type="CDD" id="cd01808">
    <property type="entry name" value="Ubl_PLICs"/>
    <property type="match status" value="1"/>
</dbReference>
<dbReference type="FunFam" id="1.10.260.100:FF:000001">
    <property type="entry name" value="Ubiquilin 1"/>
    <property type="match status" value="1"/>
</dbReference>
<dbReference type="FunFam" id="1.10.260.100:FF:000003">
    <property type="entry name" value="Ubiquilin 1"/>
    <property type="match status" value="1"/>
</dbReference>
<dbReference type="FunFam" id="1.10.8.10:FF:000007">
    <property type="entry name" value="Ubiquilin 1"/>
    <property type="match status" value="1"/>
</dbReference>
<dbReference type="FunFam" id="3.10.20.90:FF:000081">
    <property type="entry name" value="ubiquilin-1 isoform X2"/>
    <property type="match status" value="1"/>
</dbReference>
<dbReference type="Gene3D" id="1.10.260.100">
    <property type="match status" value="2"/>
</dbReference>
<dbReference type="Gene3D" id="1.10.8.10">
    <property type="entry name" value="DNA helicase RuvA subunit, C-terminal domain"/>
    <property type="match status" value="1"/>
</dbReference>
<dbReference type="Gene3D" id="3.10.20.90">
    <property type="entry name" value="Phosphatidylinositol 3-kinase Catalytic Subunit, Chain A, domain 1"/>
    <property type="match status" value="1"/>
</dbReference>
<dbReference type="InterPro" id="IPR016024">
    <property type="entry name" value="ARM-type_fold"/>
</dbReference>
<dbReference type="InterPro" id="IPR006636">
    <property type="entry name" value="STI1_HS-bd"/>
</dbReference>
<dbReference type="InterPro" id="IPR015940">
    <property type="entry name" value="UBA"/>
</dbReference>
<dbReference type="InterPro" id="IPR009060">
    <property type="entry name" value="UBA-like_sf"/>
</dbReference>
<dbReference type="InterPro" id="IPR015496">
    <property type="entry name" value="Ubiquilin"/>
</dbReference>
<dbReference type="InterPro" id="IPR000626">
    <property type="entry name" value="Ubiquitin-like_dom"/>
</dbReference>
<dbReference type="InterPro" id="IPR029071">
    <property type="entry name" value="Ubiquitin-like_domsf"/>
</dbReference>
<dbReference type="PANTHER" id="PTHR10677">
    <property type="entry name" value="UBIQUILIN"/>
    <property type="match status" value="1"/>
</dbReference>
<dbReference type="PANTHER" id="PTHR10677:SF5">
    <property type="entry name" value="UBIQUILIN-2"/>
    <property type="match status" value="1"/>
</dbReference>
<dbReference type="Pfam" id="PF00627">
    <property type="entry name" value="UBA"/>
    <property type="match status" value="1"/>
</dbReference>
<dbReference type="Pfam" id="PF00240">
    <property type="entry name" value="ubiquitin"/>
    <property type="match status" value="1"/>
</dbReference>
<dbReference type="Pfam" id="PF23195">
    <property type="entry name" value="UBQLN1"/>
    <property type="match status" value="1"/>
</dbReference>
<dbReference type="SMART" id="SM00727">
    <property type="entry name" value="STI1"/>
    <property type="match status" value="4"/>
</dbReference>
<dbReference type="SMART" id="SM00165">
    <property type="entry name" value="UBA"/>
    <property type="match status" value="1"/>
</dbReference>
<dbReference type="SMART" id="SM00213">
    <property type="entry name" value="UBQ"/>
    <property type="match status" value="1"/>
</dbReference>
<dbReference type="SUPFAM" id="SSF48371">
    <property type="entry name" value="ARM repeat"/>
    <property type="match status" value="1"/>
</dbReference>
<dbReference type="SUPFAM" id="SSF46934">
    <property type="entry name" value="UBA-like"/>
    <property type="match status" value="1"/>
</dbReference>
<dbReference type="SUPFAM" id="SSF54236">
    <property type="entry name" value="Ubiquitin-like"/>
    <property type="match status" value="1"/>
</dbReference>
<dbReference type="PROSITE" id="PS50030">
    <property type="entry name" value="UBA"/>
    <property type="match status" value="1"/>
</dbReference>
<dbReference type="PROSITE" id="PS50053">
    <property type="entry name" value="UBIQUITIN_2"/>
    <property type="match status" value="1"/>
</dbReference>
<name>UBQL2_HUMAN</name>
<feature type="initiator methionine" description="Removed" evidence="26 27">
    <location>
        <position position="1"/>
    </location>
</feature>
<feature type="chain" id="PRO_0000211011" description="Ubiquilin-2">
    <location>
        <begin position="2"/>
        <end position="624"/>
    </location>
</feature>
<feature type="domain" description="Ubiquitin-like" evidence="4">
    <location>
        <begin position="33"/>
        <end position="107"/>
    </location>
</feature>
<feature type="domain" description="STI1 1" evidence="2">
    <location>
        <begin position="178"/>
        <end position="206"/>
    </location>
</feature>
<feature type="domain" description="STI1 2" evidence="2">
    <location>
        <begin position="208"/>
        <end position="247"/>
    </location>
</feature>
<feature type="domain" description="STI1 3" evidence="2">
    <location>
        <begin position="379"/>
        <end position="426"/>
    </location>
</feature>
<feature type="domain" description="STI1 4" evidence="2">
    <location>
        <begin position="430"/>
        <end position="462"/>
    </location>
</feature>
<feature type="repeat" description="1">
    <location>
        <begin position="491"/>
        <end position="493"/>
    </location>
</feature>
<feature type="repeat" description="2">
    <location>
        <begin position="494"/>
        <end position="496"/>
    </location>
</feature>
<feature type="repeat" description="3">
    <location>
        <begin position="497"/>
        <end position="499"/>
    </location>
</feature>
<feature type="repeat" description="4">
    <location>
        <begin position="500"/>
        <end position="502"/>
    </location>
</feature>
<feature type="repeat" description="5">
    <location>
        <begin position="503"/>
        <end position="505"/>
    </location>
</feature>
<feature type="repeat" description="6">
    <location>
        <begin position="506"/>
        <end position="508"/>
    </location>
</feature>
<feature type="repeat" description="7">
    <location>
        <begin position="509"/>
        <end position="511"/>
    </location>
</feature>
<feature type="repeat" description="8">
    <location>
        <begin position="512"/>
        <end position="514"/>
    </location>
</feature>
<feature type="repeat" description="9">
    <location>
        <begin position="515"/>
        <end position="517"/>
    </location>
</feature>
<feature type="repeat" description="10">
    <location>
        <begin position="518"/>
        <end position="520"/>
    </location>
</feature>
<feature type="repeat" description="11">
    <location>
        <begin position="521"/>
        <end position="523"/>
    </location>
</feature>
<feature type="repeat" description="12">
    <location>
        <begin position="524"/>
        <end position="526"/>
    </location>
</feature>
<feature type="domain" description="UBA" evidence="3">
    <location>
        <begin position="581"/>
        <end position="621"/>
    </location>
</feature>
<feature type="region of interest" description="Disordered" evidence="5">
    <location>
        <begin position="1"/>
        <end position="32"/>
    </location>
</feature>
<feature type="region of interest" description="Disordered" evidence="5">
    <location>
        <begin position="106"/>
        <end position="141"/>
    </location>
</feature>
<feature type="region of interest" description="Disordered" evidence="5">
    <location>
        <begin position="287"/>
        <end position="349"/>
    </location>
</feature>
<feature type="region of interest" description="12 X 3 AA tandem repeats of P-X-X">
    <location>
        <begin position="491"/>
        <end position="526"/>
    </location>
</feature>
<feature type="region of interest" description="Disordered" evidence="5">
    <location>
        <begin position="512"/>
        <end position="556"/>
    </location>
</feature>
<feature type="compositionally biased region" description="Low complexity" evidence="5">
    <location>
        <begin position="15"/>
        <end position="32"/>
    </location>
</feature>
<feature type="compositionally biased region" description="Polar residues" evidence="5">
    <location>
        <begin position="106"/>
        <end position="115"/>
    </location>
</feature>
<feature type="compositionally biased region" description="Low complexity" evidence="5">
    <location>
        <begin position="116"/>
        <end position="141"/>
    </location>
</feature>
<feature type="compositionally biased region" description="Low complexity" evidence="5">
    <location>
        <begin position="294"/>
        <end position="304"/>
    </location>
</feature>
<feature type="compositionally biased region" description="Pro residues" evidence="5">
    <location>
        <begin position="316"/>
        <end position="325"/>
    </location>
</feature>
<feature type="compositionally biased region" description="Low complexity" evidence="5">
    <location>
        <begin position="326"/>
        <end position="349"/>
    </location>
</feature>
<feature type="compositionally biased region" description="Low complexity" evidence="5">
    <location>
        <begin position="535"/>
        <end position="553"/>
    </location>
</feature>
<feature type="modified residue" description="N-acetylalanine" evidence="26 27">
    <location>
        <position position="2"/>
    </location>
</feature>
<feature type="sequence variant" id="VAR_068892" description="In ALS15; uncertain significance; dbSNP:rs374522677." evidence="15">
    <original>S</original>
    <variation>N</variation>
    <location>
        <position position="155"/>
    </location>
</feature>
<feature type="sequence variant" id="VAR_068893" description="In ALS15; uncertain significance; dbSNP:rs1490021329." evidence="15">
    <original>P</original>
    <variation>T</variation>
    <location>
        <position position="189"/>
    </location>
</feature>
<feature type="sequence variant" id="VAR_052680" description="In dbSNP:rs17002693.">
    <original>L</original>
    <variation>H</variation>
    <location>
        <position position="235"/>
    </location>
</feature>
<feature type="sequence variant" id="VAR_068894" description="Found in a patient with frontotemporal dementia; likely pathogenic; dbSNP:rs1001930696." evidence="17">
    <original>A</original>
    <variation>V</variation>
    <location>
        <position position="282"/>
    </location>
</feature>
<feature type="sequence variant" id="VAR_068895" description="In ALS15; dbSNP:rs749463696." evidence="17">
    <original>A</original>
    <variation>T</variation>
    <location>
        <position position="283"/>
    </location>
</feature>
<feature type="sequence variant" id="VAR_068896" description="In ALS15; dbSNP:rs1243726473." evidence="17">
    <original>Q</original>
    <variation>R</variation>
    <location>
        <position position="425"/>
    </location>
</feature>
<feature type="sequence variant" id="VAR_068897" description="In ALS15; dbSNP:rs1569254459." evidence="16">
    <original>T</original>
    <variation>I</variation>
    <location>
        <position position="487"/>
    </location>
</feature>
<feature type="sequence variant" id="VAR_066562" description="In ALS15; leads to defective ubiquitin-mediated proteasomal degradation; reduces binding to HNRNPA1 and FAF2; increases translocation of HNRNPA1 to the cytoplasm; adversely affects ERAD; dbSNP:rs387906709." evidence="14 20 22">
    <original>P</original>
    <variation>H</variation>
    <location>
        <position position="497"/>
    </location>
</feature>
<feature type="sequence variant" id="VAR_066563" description="In ALS15; reduces binding to HNRNPA1; increases translocation of HNRNPA1 to the cytoplasm; dbSNP:rs387906710." evidence="14 22">
    <original>P</original>
    <variation>S</variation>
    <location>
        <position position="497"/>
    </location>
</feature>
<feature type="sequence variant" id="VAR_066564" description="In ALS15; leads to defective ubiquitin-mediated proteasomal degradation; reduces binding to HNRNPA1; increases translocation of HNRNPA1 to the cytoplasm; dbSNP:rs387906711." evidence="14 22">
    <original>P</original>
    <variation>T</variation>
    <location>
        <position position="506"/>
    </location>
</feature>
<feature type="sequence variant" id="VAR_066565" description="In ALS15; reduces binding to HNRNPA1; increases translocation of HNRNPA1 to the cytoplasm; dbSNP:rs387906712." evidence="14 22">
    <original>P</original>
    <variation>S</variation>
    <location>
        <position position="509"/>
    </location>
</feature>
<feature type="sequence variant" id="VAR_066566" description="In ALS15; reduces binding to HNRNPA1; increases translocation of HNRNPA1 to the cytoplasm; dbSNP:rs369947678." evidence="14 22">
    <original>P</original>
    <variation>S</variation>
    <location>
        <position position="525"/>
    </location>
</feature>
<feature type="sequence conflict" description="In Ref. 1; AAF17237 and 7; BAA34801." evidence="25" ref="1 7">
    <original>S</original>
    <variation>R</variation>
    <location>
        <position position="544"/>
    </location>
</feature>
<feature type="strand" evidence="28">
    <location>
        <begin position="23"/>
        <end position="25"/>
    </location>
</feature>
<feature type="strand" evidence="28">
    <location>
        <begin position="33"/>
        <end position="38"/>
    </location>
</feature>
<feature type="strand" evidence="28">
    <location>
        <begin position="43"/>
        <end position="48"/>
    </location>
</feature>
<feature type="helix" evidence="28">
    <location>
        <begin position="54"/>
        <end position="65"/>
    </location>
</feature>
<feature type="strand" evidence="28">
    <location>
        <begin position="69"/>
        <end position="76"/>
    </location>
</feature>
<feature type="strand" evidence="28">
    <location>
        <begin position="79"/>
        <end position="82"/>
    </location>
</feature>
<feature type="helix" evidence="28">
    <location>
        <begin position="87"/>
        <end position="91"/>
    </location>
</feature>
<feature type="strand" evidence="28">
    <location>
        <begin position="93"/>
        <end position="102"/>
    </location>
</feature>
<feature type="helix" evidence="29">
    <location>
        <begin position="579"/>
        <end position="591"/>
    </location>
</feature>
<feature type="helix" evidence="29">
    <location>
        <begin position="597"/>
        <end position="605"/>
    </location>
</feature>
<feature type="turn" evidence="29">
    <location>
        <begin position="606"/>
        <end position="608"/>
    </location>
</feature>
<feature type="helix" evidence="29">
    <location>
        <begin position="612"/>
        <end position="618"/>
    </location>
</feature>
<protein>
    <recommendedName>
        <fullName>Ubiquilin-2</fullName>
    </recommendedName>
    <alternativeName>
        <fullName>Chap1</fullName>
    </alternativeName>
    <alternativeName>
        <fullName>DSK2 homolog</fullName>
    </alternativeName>
    <alternativeName>
        <fullName>Protein linking IAP with cytoskeleton 2</fullName>
        <shortName>PLIC-2</shortName>
        <shortName>hPLIC-2</shortName>
    </alternativeName>
    <alternativeName>
        <fullName>Ubiquitin-like product Chap1/Dsk2</fullName>
    </alternativeName>
</protein>
<proteinExistence type="evidence at protein level"/>
<organism>
    <name type="scientific">Homo sapiens</name>
    <name type="common">Human</name>
    <dbReference type="NCBI Taxonomy" id="9606"/>
    <lineage>
        <taxon>Eukaryota</taxon>
        <taxon>Metazoa</taxon>
        <taxon>Chordata</taxon>
        <taxon>Craniata</taxon>
        <taxon>Vertebrata</taxon>
        <taxon>Euteleostomi</taxon>
        <taxon>Mammalia</taxon>
        <taxon>Eutheria</taxon>
        <taxon>Euarchontoglires</taxon>
        <taxon>Primates</taxon>
        <taxon>Haplorrhini</taxon>
        <taxon>Catarrhini</taxon>
        <taxon>Hominidae</taxon>
        <taxon>Homo</taxon>
    </lineage>
</organism>
<sequence length="624" mass="65696">MAENGESSGPPRPSRGPAAAQGSAAAPAEPKIIKVTVKTPKEKEEFAVPENSSVQQFKEAISKRFKSQTDQLVLIFAGKILKDQDTLIQHGIHDGLTVHLVIKSQNRPQGQSTQPSNAAGTNTTSASTPRSNSTPISTNSNPFGLGSLGGLAGLSSLGLSSTNFSELQSQMQQQLMASPEMMIQIMENPFVQSMLSNPDLMRQLIMANPQMQQLIQRNPEISHLLNNPDIMRQTLEIARNPAMMQEMMRNQDLALSNLESIPGGYNALRRMYTDIQEPMLNAAQEQFGGNPFASVGSSSSSGEGTQPSRTENRDPLPNPWAPPPATQSSATTSTTTSTGSGSGNSSSNATGNTVAAANYVASIFSTPGMQSLLQQITENPQLIQNMLSAPYMRSMMQSLSQNPDLAAQMMLNSPLFTANPQLQEQMRPQLPAFLQQMQNPDTLSAMSNPRAMQALMQIQQGLQTLATEAPGLIPSFTPGVGVGVLGTAIGPVGPVTPIGPIGPIVPFTPIGPIGPIGPTGPAAPPGSTGSGGPTGPTVSSAAPSETTSPTSESGPNQQFIQQMVQALAGANAPQLPNPEVRFQQQLEQLNAMGFLNREANLQALIATGGDINAAIERLLGSQPS</sequence>
<comment type="function">
    <text evidence="7 10 11 12 13 20">Plays an important role in the regulation of different protein degradation mechanisms and pathways including ubiquitin-proteasome system (UPS), autophagy and the endoplasmic reticulum-associated protein degradation (ERAD) pathway. Mediates the proteasomal targeting of misfolded or accumulated proteins for degradation by binding (via UBA domain) to their polyubiquitin chains and by interacting (via ubiquitin-like domain) with the subunits of the proteasome (PubMed:10983987). Plays a role in the ERAD pathway via its interaction with ER-localized proteins FAF2/UBXD8 and HERPUD1 and may form a link between the polyubiquitinated ERAD substrates and the proteasome (PubMed:18307982, PubMed:24215460). Involved in the regulation of macroautophagy and autophagosome formation; required for maturation of autophagy-related protein LC3 from the cytosolic form LC3-I to the membrane-bound form LC3-II and may assist in the maturation of autophagosomes to autolysosomes by mediating autophagosome-lysosome fusion (PubMed:19148225, PubMed:20529957). Negatively regulates the endocytosis of GPCR receptors: AVPR2 and ADRB2, by specifically reducing the rate at which receptor-arrestin complexes concentrate in clathrin-coated pits (CCPs) (PubMed:18199683).</text>
</comment>
<comment type="subunit">
    <text evidence="1 6 7 8 9 10 11 13 18 19 20 21 22">Homodimer. Forms heterodimer with UBQLN1. Binds UBE3A and BTRC. Interacts with the 19S proteasome subunit. Interacts with C9orf72. Interacts with HNRNPA1 and HNRNPU. Found in a complex with UBQLN1 and MAP1LC3A/B/C. Interacts with EPS15, EPN1 and EPN2. Interacts with HERPUD1. Interacts with RAD23A. Interacts with TARDBP. Interacts (via C-terminus) with FAF2 (via N-terminus). Interacts with UBQLN4. Binds CD47 (By similarity).</text>
</comment>
<comment type="interaction">
    <interactant intactId="EBI-947187">
        <id>Q9UHD9</id>
    </interactant>
    <interactant intactId="EBI-11096309">
        <id>Q9NYB9-2</id>
        <label>ABI2</label>
    </interactant>
    <organismsDiffer>false</organismsDiffer>
    <experiments>3</experiments>
</comment>
<comment type="interaction">
    <interactant intactId="EBI-947187">
        <id>Q9UHD9</id>
    </interactant>
    <interactant intactId="EBI-12007918">
        <id>O00154-4</id>
        <label>ACOT7</label>
    </interactant>
    <organismsDiffer>false</organismsDiffer>
    <experiments>3</experiments>
</comment>
<comment type="interaction">
    <interactant intactId="EBI-947187">
        <id>Q9UHD9</id>
    </interactant>
    <interactant intactId="EBI-12200127">
        <id>O15072</id>
        <label>ADAMTS3</label>
    </interactant>
    <organismsDiffer>false</organismsDiffer>
    <experiments>3</experiments>
</comment>
<comment type="interaction">
    <interactant intactId="EBI-947187">
        <id>Q9UHD9</id>
    </interactant>
    <interactant intactId="EBI-954387">
        <id>Q16186</id>
        <label>ADRM1</label>
    </interactant>
    <organismsDiffer>false</organismsDiffer>
    <experiments>5</experiments>
</comment>
<comment type="interaction">
    <interactant intactId="EBI-947187">
        <id>Q9UHD9</id>
    </interactant>
    <interactant intactId="EBI-712648">
        <id>O95994</id>
        <label>AGR2</label>
    </interactant>
    <organismsDiffer>false</organismsDiffer>
    <experiments>5</experiments>
</comment>
<comment type="interaction">
    <interactant intactId="EBI-947187">
        <id>Q9UHD9</id>
    </interactant>
    <interactant intactId="EBI-3925742">
        <id>Q8TD06</id>
        <label>AGR3</label>
    </interactant>
    <organismsDiffer>false</organismsDiffer>
    <experiments>6</experiments>
</comment>
<comment type="interaction">
    <interactant intactId="EBI-947187">
        <id>Q9UHD9</id>
    </interactant>
    <interactant intactId="EBI-11893530">
        <id>Q9NP70</id>
        <label>AMBN</label>
    </interactant>
    <organismsDiffer>false</organismsDiffer>
    <experiments>3</experiments>
</comment>
<comment type="interaction">
    <interactant intactId="EBI-947187">
        <id>Q9UHD9</id>
    </interactant>
    <interactant intactId="EBI-16746154">
        <id>Q7Z3H0-1</id>
        <label>ANKRD33</label>
    </interactant>
    <organismsDiffer>false</organismsDiffer>
    <experiments>3</experiments>
</comment>
<comment type="interaction">
    <interactant intactId="EBI-947187">
        <id>Q9UHD9</id>
    </interactant>
    <interactant intactId="EBI-18302142">
        <id>P55056</id>
        <label>APOC4</label>
    </interactant>
    <organismsDiffer>false</organismsDiffer>
    <experiments>3</experiments>
</comment>
<comment type="interaction">
    <interactant intactId="EBI-947187">
        <id>Q9UHD9</id>
    </interactant>
    <interactant intactId="EBI-2875665">
        <id>Q96B67</id>
        <label>ARRDC3</label>
    </interactant>
    <organismsDiffer>false</organismsDiffer>
    <experiments>3</experiments>
</comment>
<comment type="interaction">
    <interactant intactId="EBI-947187">
        <id>Q9UHD9</id>
    </interactant>
    <interactant intactId="EBI-957042">
        <id>P50553</id>
        <label>ASCL1</label>
    </interactant>
    <organismsDiffer>false</organismsDiffer>
    <experiments>3</experiments>
</comment>
<comment type="interaction">
    <interactant intactId="EBI-947187">
        <id>Q9UHD9</id>
    </interactant>
    <interactant intactId="EBI-750475">
        <id>P45381</id>
        <label>ASPA</label>
    </interactant>
    <organismsDiffer>false</organismsDiffer>
    <experiments>3</experiments>
</comment>
<comment type="interaction">
    <interactant intactId="EBI-947187">
        <id>Q9UHD9</id>
    </interactant>
    <interactant intactId="EBI-702390">
        <id>Q9UBB4</id>
        <label>ATXN10</label>
    </interactant>
    <organismsDiffer>false</organismsDiffer>
    <experiments>3</experiments>
</comment>
<comment type="interaction">
    <interactant intactId="EBI-947187">
        <id>Q9UHD9</id>
    </interactant>
    <interactant intactId="EBI-2513837">
        <id>P25311</id>
        <label>AZGP1</label>
    </interactant>
    <organismsDiffer>false</organismsDiffer>
    <experiments>3</experiments>
</comment>
<comment type="interaction">
    <interactant intactId="EBI-947187">
        <id>Q9UHD9</id>
    </interactant>
    <interactant intactId="EBI-10988864">
        <id>P46379-2</id>
        <label>BAG6</label>
    </interactant>
    <organismsDiffer>false</organismsDiffer>
    <experiments>3</experiments>
</comment>
<comment type="interaction">
    <interactant intactId="EBI-947187">
        <id>Q9UHD9</id>
    </interactant>
    <interactant intactId="EBI-526406">
        <id>O43521</id>
        <label>BCL2L11</label>
    </interactant>
    <organismsDiffer>false</organismsDiffer>
    <experiments>3</experiments>
</comment>
<comment type="interaction">
    <interactant intactId="EBI-947187">
        <id>Q9UHD9</id>
    </interactant>
    <interactant intactId="EBI-953896">
        <id>Q9NP55</id>
        <label>BPIFA1</label>
    </interactant>
    <organismsDiffer>false</organismsDiffer>
    <experiments>3</experiments>
</comment>
<comment type="interaction">
    <interactant intactId="EBI-947187">
        <id>Q9UHD9</id>
    </interactant>
    <interactant intactId="EBI-946029">
        <id>Q6P1W5</id>
        <label>C1orf94</label>
    </interactant>
    <organismsDiffer>false</organismsDiffer>
    <experiments>3</experiments>
</comment>
<comment type="interaction">
    <interactant intactId="EBI-947187">
        <id>Q9UHD9</id>
    </interactant>
    <interactant intactId="EBI-1220209">
        <id>P02745</id>
        <label>C1QA</label>
    </interactant>
    <organismsDiffer>false</organismsDiffer>
    <experiments>6</experiments>
</comment>
<comment type="interaction">
    <interactant intactId="EBI-947187">
        <id>Q9UHD9</id>
    </interactant>
    <interactant intactId="EBI-2813376">
        <id>P02746</id>
        <label>C1QB</label>
    </interactant>
    <organismsDiffer>false</organismsDiffer>
    <experiments>3</experiments>
</comment>
<comment type="interaction">
    <interactant intactId="EBI-947187">
        <id>Q9UHD9</id>
    </interactant>
    <interactant intactId="EBI-1220222">
        <id>P02747</id>
        <label>C1QC</label>
    </interactant>
    <organismsDiffer>false</organismsDiffer>
    <experiments>5</experiments>
</comment>
<comment type="interaction">
    <interactant intactId="EBI-947187">
        <id>Q9UHD9</id>
    </interactant>
    <interactant intactId="EBI-12062109">
        <id>Q86Z23</id>
        <label>C1QL4</label>
    </interactant>
    <organismsDiffer>false</organismsDiffer>
    <experiments>3</experiments>
</comment>
<comment type="interaction">
    <interactant intactId="EBI-947187">
        <id>Q9UHD9</id>
    </interactant>
    <interactant intactId="EBI-2817707">
        <id>Q9BXJ5</id>
        <label>C1QTNF2</label>
    </interactant>
    <organismsDiffer>false</organismsDiffer>
    <experiments>3</experiments>
</comment>
<comment type="interaction">
    <interactant intactId="EBI-947187">
        <id>Q9UHD9</id>
    </interactant>
    <interactant intactId="EBI-11955105">
        <id>Q9BXJ3</id>
        <label>C1QTNF4</label>
    </interactant>
    <organismsDiffer>false</organismsDiffer>
    <experiments>3</experiments>
</comment>
<comment type="interaction">
    <interactant intactId="EBI-947187">
        <id>Q9UHD9</id>
    </interactant>
    <interactant intactId="EBI-11990870">
        <id>Q6UXA7</id>
        <label>C6orf15</label>
    </interactant>
    <organismsDiffer>false</organismsDiffer>
    <experiments>8</experiments>
</comment>
<comment type="interaction">
    <interactant intactId="EBI-947187">
        <id>Q9UHD9</id>
    </interactant>
    <interactant intactId="EBI-9021652">
        <id>P07360</id>
        <label>C8G</label>
    </interactant>
    <organismsDiffer>false</organismsDiffer>
    <experiments>3</experiments>
</comment>
<comment type="interaction">
    <interactant intactId="EBI-947187">
        <id>Q9UHD9</id>
    </interactant>
    <interactant intactId="EBI-6149008">
        <id>O75808</id>
        <label>CAPN15</label>
    </interactant>
    <organismsDiffer>false</organismsDiffer>
    <experiments>3</experiments>
</comment>
<comment type="interaction">
    <interactant intactId="EBI-947187">
        <id>Q9UHD9</id>
    </interactant>
    <interactant intactId="EBI-6624398">
        <id>P06307</id>
        <label>CCK</label>
    </interactant>
    <organismsDiffer>false</organismsDiffer>
    <experiments>3</experiments>
</comment>
<comment type="interaction">
    <interactant intactId="EBI-947187">
        <id>Q9UHD9</id>
    </interactant>
    <interactant intactId="EBI-12204739">
        <id>O15467</id>
        <label>CCL16</label>
    </interactant>
    <organismsDiffer>false</organismsDiffer>
    <experiments>3</experiments>
</comment>
<comment type="interaction">
    <interactant intactId="EBI-947187">
        <id>Q9UHD9</id>
    </interactant>
    <interactant intactId="EBI-8459634">
        <id>P10147</id>
        <label>CCL3</label>
    </interactant>
    <organismsDiffer>false</organismsDiffer>
    <experiments>3</experiments>
</comment>
<comment type="interaction">
    <interactant intactId="EBI-947187">
        <id>Q9UHD9</id>
    </interactant>
    <interactant intactId="EBI-718759">
        <id>P80098</id>
        <label>CCL7</label>
    </interactant>
    <organismsDiffer>false</organismsDiffer>
    <experiments>3</experiments>
</comment>
<comment type="interaction">
    <interactant intactId="EBI-947187">
        <id>Q9UHD9</id>
    </interactant>
    <interactant intactId="EBI-1237454">
        <id>O00622</id>
        <label>CCN1</label>
    </interactant>
    <organismsDiffer>false</organismsDiffer>
    <experiments>3</experiments>
</comment>
<comment type="interaction">
    <interactant intactId="EBI-947187">
        <id>Q9UHD9</id>
    </interactant>
    <interactant intactId="EBI-2824782">
        <id>Q8TCZ2</id>
        <label>CD99L2</label>
    </interactant>
    <organismsDiffer>false</organismsDiffer>
    <experiments>3</experiments>
</comment>
<comment type="interaction">
    <interactant intactId="EBI-947187">
        <id>Q9UHD9</id>
    </interactant>
    <interactant intactId="EBI-10215061">
        <id>P55291</id>
        <label>CDH15</label>
    </interactant>
    <organismsDiffer>false</organismsDiffer>
    <experiments>3</experiments>
</comment>
<comment type="interaction">
    <interactant intactId="EBI-947187">
        <id>Q9UHD9</id>
    </interactant>
    <interactant intactId="EBI-12278850">
        <id>Q12864</id>
        <label>CDH17</label>
    </interactant>
    <organismsDiffer>false</organismsDiffer>
    <experiments>3</experiments>
</comment>
<comment type="interaction">
    <interactant intactId="EBI-947187">
        <id>Q9UHD9</id>
    </interactant>
    <interactant intactId="EBI-2876678">
        <id>Q9H305</id>
        <label>CDIP1</label>
    </interactant>
    <organismsDiffer>false</organismsDiffer>
    <experiments>3</experiments>
</comment>
<comment type="interaction">
    <interactant intactId="EBI-947187">
        <id>Q9UHD9</id>
    </interactant>
    <interactant intactId="EBI-4314501">
        <id>P40199</id>
        <label>CEACAM6</label>
    </interactant>
    <organismsDiffer>false</organismsDiffer>
    <experiments>5</experiments>
</comment>
<comment type="interaction">
    <interactant intactId="EBI-947187">
        <id>Q9UHD9</id>
    </interactant>
    <interactant intactId="EBI-3957044">
        <id>Q9Y240</id>
        <label>CLEC11A</label>
    </interactant>
    <organismsDiffer>false</organismsDiffer>
    <experiments>3</experiments>
</comment>
<comment type="interaction">
    <interactant intactId="EBI-947187">
        <id>Q9UHD9</id>
    </interactant>
    <interactant intactId="EBI-12183429">
        <id>Q6UWE3</id>
        <label>CLPSL2</label>
    </interactant>
    <organismsDiffer>false</organismsDiffer>
    <experiments>6</experiments>
</comment>
<comment type="interaction">
    <interactant intactId="EBI-947187">
        <id>Q9UHD9</id>
    </interactant>
    <interactant intactId="EBI-741032">
        <id>Q8NE01</id>
        <label>CNNM3</label>
    </interactant>
    <organismsDiffer>false</organismsDiffer>
    <experiments>3</experiments>
</comment>
<comment type="interaction">
    <interactant intactId="EBI-947187">
        <id>Q9UHD9</id>
    </interactant>
    <interactant intactId="EBI-2528309">
        <id>Q03692</id>
        <label>COL10A1</label>
    </interactant>
    <organismsDiffer>false</organismsDiffer>
    <experiments>3</experiments>
</comment>
<comment type="interaction">
    <interactant intactId="EBI-947187">
        <id>Q9UHD9</id>
    </interactant>
    <interactant intactId="EBI-2528742">
        <id>Q9UMD9</id>
        <label>COL17A1</label>
    </interactant>
    <organismsDiffer>false</organismsDiffer>
    <experiments>3</experiments>
</comment>
<comment type="interaction">
    <interactant intactId="EBI-947187">
        <id>Q9UHD9</id>
    </interactant>
    <interactant intactId="EBI-983038">
        <id>P08123</id>
        <label>COL1A2</label>
    </interactant>
    <organismsDiffer>false</organismsDiffer>
    <experiments>5</experiments>
</comment>
<comment type="interaction">
    <interactant intactId="EBI-947187">
        <id>Q9UHD9</id>
    </interactant>
    <interactant intactId="EBI-747133">
        <id>P27658</id>
        <label>COL8A1</label>
    </interactant>
    <organismsDiffer>false</organismsDiffer>
    <experiments>3</experiments>
</comment>
<comment type="interaction">
    <interactant intactId="EBI-947187">
        <id>Q9UHD9</id>
    </interactant>
    <interactant intactId="EBI-714971">
        <id>Q14055</id>
        <label>COL9A2</label>
    </interactant>
    <organismsDiffer>false</organismsDiffer>
    <experiments>3</experiments>
</comment>
<comment type="interaction">
    <interactant intactId="EBI-947187">
        <id>Q9UHD9</id>
    </interactant>
    <interactant intactId="EBI-10263496">
        <id>Q8IYK4</id>
        <label>COLGALT2</label>
    </interactant>
    <organismsDiffer>false</organismsDiffer>
    <experiments>3</experiments>
</comment>
<comment type="interaction">
    <interactant intactId="EBI-947187">
        <id>Q9UHD9</id>
    </interactant>
    <interactant intactId="EBI-2433045">
        <id>P47710</id>
        <label>CSN1S1</label>
    </interactant>
    <organismsDiffer>false</organismsDiffer>
    <experiments>3</experiments>
</comment>
<comment type="interaction">
    <interactant intactId="EBI-947187">
        <id>Q9UHD9</id>
    </interactant>
    <interactant intactId="EBI-1642112">
        <id>P05814</id>
        <label>CSN2</label>
    </interactant>
    <organismsDiffer>false</organismsDiffer>
    <experiments>6</experiments>
</comment>
<comment type="interaction">
    <interactant intactId="EBI-947187">
        <id>Q9UHD9</id>
    </interactant>
    <interactant intactId="EBI-2602175">
        <id>P07498</id>
        <label>CSN3</label>
    </interactant>
    <organismsDiffer>false</organismsDiffer>
    <experiments>3</experiments>
</comment>
<comment type="interaction">
    <interactant intactId="EBI-947187">
        <id>Q9UHD9</id>
    </interactant>
    <interactant intactId="EBI-1056240">
        <id>P01037</id>
        <label>CST1</label>
    </interactant>
    <organismsDiffer>false</organismsDiffer>
    <experiments>3</experiments>
</comment>
<comment type="interaction">
    <interactant intactId="EBI-947187">
        <id>Q9UHD9</id>
    </interactant>
    <interactant intactId="EBI-1049999">
        <id>P01036</id>
        <label>CST4</label>
    </interactant>
    <organismsDiffer>false</organismsDiffer>
    <experiments>3</experiments>
</comment>
<comment type="interaction">
    <interactant intactId="EBI-947187">
        <id>Q9UHD9</id>
    </interactant>
    <interactant intactId="EBI-711360">
        <id>P33240</id>
        <label>CSTF2</label>
    </interactant>
    <organismsDiffer>false</organismsDiffer>
    <experiments>5</experiments>
</comment>
<comment type="interaction">
    <interactant intactId="EBI-947187">
        <id>Q9UHD9</id>
    </interactant>
    <interactant intactId="EBI-747012">
        <id>Q9H0L4</id>
        <label>CSTF2T</label>
    </interactant>
    <organismsDiffer>false</organismsDiffer>
    <experiments>5</experiments>
</comment>
<comment type="interaction">
    <interactant intactId="EBI-947187">
        <id>Q9UHD9</id>
    </interactant>
    <interactant intactId="EBI-1188472">
        <id>P78358</id>
        <label>CTAG1B</label>
    </interactant>
    <organismsDiffer>false</organismsDiffer>
    <experiments>3</experiments>
</comment>
<comment type="interaction">
    <interactant intactId="EBI-947187">
        <id>Q9UHD9</id>
    </interactant>
    <interactant intactId="EBI-5323433">
        <id>O95476</id>
        <label>CTDNEP1</label>
    </interactant>
    <organismsDiffer>false</organismsDiffer>
    <experiments>3</experiments>
</comment>
<comment type="interaction">
    <interactant intactId="EBI-947187">
        <id>Q9UHD9</id>
    </interactant>
    <interactant intactId="EBI-724310">
        <id>Q15038</id>
        <label>DAZAP2</label>
    </interactant>
    <organismsDiffer>false</organismsDiffer>
    <experiments>3</experiments>
</comment>
<comment type="interaction">
    <interactant intactId="EBI-947187">
        <id>Q9UHD9</id>
    </interactant>
    <interactant intactId="EBI-711903">
        <id>Q08345-2</id>
        <label>DDR1</label>
    </interactant>
    <organismsDiffer>false</organismsDiffer>
    <experiments>5</experiments>
</comment>
<comment type="interaction">
    <interactant intactId="EBI-947187">
        <id>Q9UHD9</id>
    </interactant>
    <interactant intactId="EBI-726336">
        <id>P59665</id>
        <label>DEFA1B</label>
    </interactant>
    <organismsDiffer>false</organismsDiffer>
    <experiments>3</experiments>
</comment>
<comment type="interaction">
    <interactant intactId="EBI-947187">
        <id>Q9UHD9</id>
    </interactant>
    <interactant intactId="EBI-10222451">
        <id>Q01524</id>
        <label>DEFA6</label>
    </interactant>
    <organismsDiffer>false</organismsDiffer>
    <experiments>6</experiments>
</comment>
<comment type="interaction">
    <interactant intactId="EBI-947187">
        <id>Q9UHD9</id>
    </interactant>
    <interactant intactId="EBI-12253292">
        <id>Q30KQ5</id>
        <label>DEFB115</label>
    </interactant>
    <organismsDiffer>false</organismsDiffer>
    <experiments>3</experiments>
</comment>
<comment type="interaction">
    <interactant intactId="EBI-947187">
        <id>Q9UHD9</id>
    </interactant>
    <interactant intactId="EBI-2806959">
        <id>Q6ICB0</id>
        <label>DESI1</label>
    </interactant>
    <organismsDiffer>false</organismsDiffer>
    <experiments>5</experiments>
</comment>
<comment type="interaction">
    <interactant intactId="EBI-947187">
        <id>Q9UHD9</id>
    </interactant>
    <interactant intactId="EBI-7943171">
        <id>Q6E0U4</id>
        <label>DMKN</label>
    </interactant>
    <organismsDiffer>false</organismsDiffer>
    <experiments>3</experiments>
</comment>
<comment type="interaction">
    <interactant intactId="EBI-947187">
        <id>Q9UHD9</id>
    </interactant>
    <interactant intactId="EBI-7357329">
        <id>Q9H596</id>
        <label>DUSP21</label>
    </interactant>
    <organismsDiffer>false</organismsDiffer>
    <experiments>5</experiments>
</comment>
<comment type="interaction">
    <interactant intactId="EBI-947187">
        <id>Q9UHD9</id>
    </interactant>
    <interactant intactId="EBI-947964">
        <id>Q16610</id>
        <label>ECM1</label>
    </interactant>
    <organismsDiffer>false</organismsDiffer>
    <experiments>3</experiments>
</comment>
<comment type="interaction">
    <interactant intactId="EBI-947187">
        <id>Q9UHD9</id>
    </interactant>
    <interactant intactId="EBI-12208839">
        <id>Q9H1Z8</id>
        <label>ECRG4</label>
    </interactant>
    <organismsDiffer>false</organismsDiffer>
    <experiments>3</experiments>
</comment>
<comment type="interaction">
    <interactant intactId="EBI-947187">
        <id>Q9UHD9</id>
    </interactant>
    <interactant intactId="EBI-536772">
        <id>Q12805</id>
        <label>EFEMP1</label>
    </interactant>
    <organismsDiffer>false</organismsDiffer>
    <experiments>3</experiments>
</comment>
<comment type="interaction">
    <interactant intactId="EBI-947187">
        <id>Q9UHD9</id>
    </interactant>
    <interactant intactId="EBI-715208">
        <id>Q8IUX8</id>
        <label>EGFL6</label>
    </interactant>
    <organismsDiffer>false</organismsDiffer>
    <experiments>3</experiments>
</comment>
<comment type="interaction">
    <interactant intactId="EBI-947187">
        <id>Q9UHD9</id>
    </interactant>
    <interactant intactId="EBI-953772">
        <id>Q96DN0</id>
        <label>ERP27</label>
    </interactant>
    <organismsDiffer>false</organismsDiffer>
    <experiments>3</experiments>
</comment>
<comment type="interaction">
    <interactant intactId="EBI-947187">
        <id>Q9UHD9</id>
    </interactant>
    <interactant intactId="EBI-946830">
        <id>P30040</id>
        <label>ERP29</label>
    </interactant>
    <organismsDiffer>false</organismsDiffer>
    <experiments>3</experiments>
</comment>
<comment type="interaction">
    <interactant intactId="EBI-947187">
        <id>Q9UHD9</id>
    </interactant>
    <interactant intactId="EBI-2834493">
        <id>Q9HBU6</id>
        <label>ETNK1</label>
    </interactant>
    <organismsDiffer>false</organismsDiffer>
    <experiments>3</experiments>
</comment>
<comment type="interaction">
    <interactant intactId="EBI-947187">
        <id>Q9UHD9</id>
    </interactant>
    <interactant intactId="EBI-719750">
        <id>P00742</id>
        <label>F10</label>
    </interactant>
    <organismsDiffer>false</organismsDiffer>
    <experiments>3</experiments>
</comment>
<comment type="interaction">
    <interactant intactId="EBI-947187">
        <id>Q9UHD9</id>
    </interactant>
    <interactant intactId="EBI-11978259">
        <id>Q92567-2</id>
        <label>FAM168A</label>
    </interactant>
    <organismsDiffer>false</organismsDiffer>
    <experiments>3</experiments>
</comment>
<comment type="interaction">
    <interactant intactId="EBI-947187">
        <id>Q9UHD9</id>
    </interactant>
    <interactant intactId="EBI-2807642">
        <id>Q8WU58</id>
        <label>FAM222B</label>
    </interactant>
    <organismsDiffer>false</organismsDiffer>
    <experiments>3</experiments>
</comment>
<comment type="interaction">
    <interactant intactId="EBI-947187">
        <id>Q9UHD9</id>
    </interactant>
    <interactant intactId="EBI-12210457">
        <id>Q8NFU4</id>
        <label>FDCSP</label>
    </interactant>
    <organismsDiffer>false</organismsDiffer>
    <experiments>3</experiments>
</comment>
<comment type="interaction">
    <interactant intactId="EBI-947187">
        <id>Q9UHD9</id>
    </interactant>
    <interactant intactId="EBI-12184083">
        <id>O60258</id>
        <label>FGF17</label>
    </interactant>
    <organismsDiffer>false</organismsDiffer>
    <experiments>3</experiments>
</comment>
<comment type="interaction">
    <interactant intactId="EBI-947187">
        <id>Q9UHD9</id>
    </interactant>
    <interactant intactId="EBI-719873">
        <id>P26885</id>
        <label>FKBP2</label>
    </interactant>
    <organismsDiffer>false</organismsDiffer>
    <experiments>3</experiments>
</comment>
<comment type="interaction">
    <interactant intactId="EBI-947187">
        <id>Q9UHD9</id>
    </interactant>
    <interactant intactId="EBI-744935">
        <id>Q9BVV2</id>
        <label>FNDC11</label>
    </interactant>
    <organismsDiffer>false</organismsDiffer>
    <experiments>3</experiments>
</comment>
<comment type="interaction">
    <interactant intactId="EBI-947187">
        <id>Q9UHD9</id>
    </interactant>
    <interactant intactId="EBI-2512153">
        <id>P04066</id>
        <label>FUCA1</label>
    </interactant>
    <organismsDiffer>false</organismsDiffer>
    <experiments>5</experiments>
</comment>
<comment type="interaction">
    <interactant intactId="EBI-947187">
        <id>Q9UHD9</id>
    </interactant>
    <interactant intactId="EBI-746917">
        <id>O75084</id>
        <label>FZD7</label>
    </interactant>
    <organismsDiffer>false</organismsDiffer>
    <experiments>3</experiments>
</comment>
<comment type="interaction">
    <interactant intactId="EBI-947187">
        <id>Q9UHD9</id>
    </interactant>
    <interactant intactId="EBI-6624768">
        <id>P22466</id>
        <label>GAL</label>
    </interactant>
    <organismsDiffer>false</organismsDiffer>
    <experiments>3</experiments>
</comment>
<comment type="interaction">
    <interactant intactId="EBI-947187">
        <id>Q9UHD9</id>
    </interactant>
    <interactant intactId="EBI-12244186">
        <id>Q9UBC7</id>
        <label>GALP</label>
    </interactant>
    <organismsDiffer>false</organismsDiffer>
    <experiments>6</experiments>
</comment>
<comment type="interaction">
    <interactant intactId="EBI-947187">
        <id>Q9UHD9</id>
    </interactant>
    <interactant intactId="EBI-10319458">
        <id>Q9UBU3</id>
        <label>GHRL</label>
    </interactant>
    <organismsDiffer>false</organismsDiffer>
    <experiments>3</experiments>
</comment>
<comment type="interaction">
    <interactant intactId="EBI-947187">
        <id>Q9UHD9</id>
    </interactant>
    <interactant intactId="EBI-22387200">
        <id>Q16538</id>
        <label>GPR162</label>
    </interactant>
    <organismsDiffer>false</organismsDiffer>
    <experiments>3</experiments>
</comment>
<comment type="interaction">
    <interactant intactId="EBI-947187">
        <id>Q9UHD9</id>
    </interactant>
    <interactant intactId="EBI-749411">
        <id>Q96SL4</id>
        <label>GPX7</label>
    </interactant>
    <organismsDiffer>false</organismsDiffer>
    <experiments>3</experiments>
</comment>
<comment type="interaction">
    <interactant intactId="EBI-947187">
        <id>Q9UHD9</id>
    </interactant>
    <interactant intactId="EBI-12244272">
        <id>Q02747</id>
        <label>GUCA2A</label>
    </interactant>
    <organismsDiffer>false</organismsDiffer>
    <experiments>3</experiments>
</comment>
<comment type="interaction">
    <interactant intactId="EBI-947187">
        <id>Q9UHD9</id>
    </interactant>
    <interactant intactId="EBI-12349759">
        <id>Q16661</id>
        <label>GUCA2B</label>
    </interactant>
    <organismsDiffer>false</organismsDiffer>
    <experiments>3</experiments>
</comment>
<comment type="interaction">
    <interactant intactId="EBI-947187">
        <id>Q9UHD9</id>
    </interactant>
    <interactant intactId="EBI-10329202">
        <id>Q9Y5R4</id>
        <label>HEMK1</label>
    </interactant>
    <organismsDiffer>false</organismsDiffer>
    <experiments>3</experiments>
</comment>
<comment type="interaction">
    <interactant intactId="EBI-947187">
        <id>Q9UHD9</id>
    </interactant>
    <interactant intactId="EBI-7133736">
        <id>P07686</id>
        <label>HEXB</label>
    </interactant>
    <organismsDiffer>false</organismsDiffer>
    <experiments>3</experiments>
</comment>
<comment type="interaction">
    <interactant intactId="EBI-947187">
        <id>Q9UHD9</id>
    </interactant>
    <interactant intactId="EBI-740220">
        <id>O14964</id>
        <label>HGS</label>
    </interactant>
    <organismsDiffer>false</organismsDiffer>
    <experiments>3</experiments>
</comment>
<comment type="interaction">
    <interactant intactId="EBI-947187">
        <id>Q9UHD9</id>
    </interactant>
    <interactant intactId="EBI-352662">
        <id>P09651</id>
        <label>HNRNPA1</label>
    </interactant>
    <organismsDiffer>false</organismsDiffer>
    <experiments>2</experiments>
</comment>
<comment type="interaction">
    <interactant intactId="EBI-947187">
        <id>Q9UHD9</id>
    </interactant>
    <interactant intactId="EBI-352677">
        <id>P09651-2</id>
        <label>HNRNPA1</label>
    </interactant>
    <organismsDiffer>false</organismsDiffer>
    <experiments>4</experiments>
</comment>
<comment type="interaction">
    <interactant intactId="EBI-947187">
        <id>Q9UHD9</id>
    </interactant>
    <interactant intactId="EBI-351126">
        <id>Q00839</id>
        <label>HNRNPU</label>
    </interactant>
    <organismsDiffer>false</organismsDiffer>
    <experiments>3</experiments>
</comment>
<comment type="interaction">
    <interactant intactId="EBI-947187">
        <id>Q9UHD9</id>
    </interactant>
    <interactant intactId="EBI-2963255">
        <id>Q53GQ0</id>
        <label>HSD17B12</label>
    </interactant>
    <organismsDiffer>false</organismsDiffer>
    <experiments>3</experiments>
</comment>
<comment type="interaction">
    <interactant intactId="EBI-947187">
        <id>Q9UHD9</id>
    </interactant>
    <interactant intactId="EBI-750892">
        <id>P48723</id>
        <label>HSPA13</label>
    </interactant>
    <organismsDiffer>false</organismsDiffer>
    <experiments>6</experiments>
</comment>
<comment type="interaction">
    <interactant intactId="EBI-947187">
        <id>Q9UHD9</id>
    </interactant>
    <interactant intactId="EBI-466029">
        <id>P42858</id>
        <label>HTT</label>
    </interactant>
    <organismsDiffer>false</organismsDiffer>
    <experiments>12</experiments>
</comment>
<comment type="interaction">
    <interactant intactId="EBI-947187">
        <id>Q9UHD9</id>
    </interactant>
    <interactant intactId="EBI-1035358">
        <id>P05362</id>
        <label>ICAM1</label>
    </interactant>
    <organismsDiffer>false</organismsDiffer>
    <experiments>5</experiments>
</comment>
<comment type="interaction">
    <interactant intactId="EBI-947187">
        <id>Q9UHD9</id>
    </interactant>
    <interactant intactId="EBI-11478589">
        <id>P01562</id>
        <label>IFNA1</label>
    </interactant>
    <organismsDiffer>false</organismsDiffer>
    <experiments>3</experiments>
</comment>
<comment type="interaction">
    <interactant intactId="EBI-947187">
        <id>Q9UHD9</id>
    </interactant>
    <interactant intactId="EBI-947015">
        <id>P24592</id>
        <label>IGFBP6</label>
    </interactant>
    <organismsDiffer>false</organismsDiffer>
    <experiments>3</experiments>
</comment>
<comment type="interaction">
    <interactant intactId="EBI-947187">
        <id>Q9UHD9</id>
    </interactant>
    <interactant intactId="EBI-1222221">
        <id>P15814</id>
        <label>IGLL1</label>
    </interactant>
    <organismsDiffer>false</organismsDiffer>
    <experiments>3</experiments>
</comment>
<comment type="interaction">
    <interactant intactId="EBI-947187">
        <id>Q9UHD9</id>
    </interactant>
    <interactant intactId="EBI-751694">
        <id>P20809</id>
        <label>IL11</label>
    </interactant>
    <organismsDiffer>false</organismsDiffer>
    <experiments>3</experiments>
</comment>
<comment type="interaction">
    <interactant intactId="EBI-947187">
        <id>Q9UHD9</id>
    </interactant>
    <interactant intactId="EBI-11953784">
        <id>P0C7M6</id>
        <label>IQCF3</label>
    </interactant>
    <organismsDiffer>false</organismsDiffer>
    <experiments>3</experiments>
</comment>
<comment type="interaction">
    <interactant intactId="EBI-947187">
        <id>Q9UHD9</id>
    </interactant>
    <interactant intactId="EBI-12188567">
        <id>P53990-3</id>
        <label>IST1</label>
    </interactant>
    <organismsDiffer>false</organismsDiffer>
    <experiments>3</experiments>
</comment>
<comment type="interaction">
    <interactant intactId="EBI-947187">
        <id>Q9UHD9</id>
    </interactant>
    <interactant intactId="EBI-751388">
        <id>P27987</id>
        <label>ITPKB</label>
    </interactant>
    <organismsDiffer>false</organismsDiffer>
    <experiments>5</experiments>
</comment>
<comment type="interaction">
    <interactant intactId="EBI-947187">
        <id>Q9UHD9</id>
    </interactant>
    <interactant intactId="EBI-12337095">
        <id>Q6GPH6-2</id>
        <label>ITPRIPL1</label>
    </interactant>
    <organismsDiffer>false</organismsDiffer>
    <experiments>3</experiments>
</comment>
<comment type="interaction">
    <interactant intactId="EBI-947187">
        <id>Q9UHD9</id>
    </interactant>
    <interactant intactId="EBI-2847044">
        <id>Q96JJ6</id>
        <label>JPH4</label>
    </interactant>
    <organismsDiffer>false</organismsDiffer>
    <experiments>3</experiments>
</comment>
<comment type="interaction">
    <interactant intactId="EBI-947187">
        <id>Q9UHD9</id>
    </interactant>
    <interactant intactId="EBI-23759979">
        <id>Q15726</id>
        <label>KISS1</label>
    </interactant>
    <organismsDiffer>false</organismsDiffer>
    <experiments>3</experiments>
</comment>
<comment type="interaction">
    <interactant intactId="EBI-947187">
        <id>Q9UHD9</id>
    </interactant>
    <interactant intactId="EBI-2691832">
        <id>Q9NVR0</id>
        <label>KLHL11</label>
    </interactant>
    <organismsDiffer>false</organismsDiffer>
    <experiments>3</experiments>
</comment>
<comment type="interaction">
    <interactant intactId="EBI-947187">
        <id>Q9UHD9</id>
    </interactant>
    <interactant intactId="EBI-739890">
        <id>Q9P2K6</id>
        <label>KLHL42</label>
    </interactant>
    <organismsDiffer>false</organismsDiffer>
    <experiments>5</experiments>
</comment>
<comment type="interaction">
    <interactant intactId="EBI-947187">
        <id>Q9UHD9</id>
    </interactant>
    <interactant intactId="EBI-702198">
        <id>P02538</id>
        <label>KRT6A</label>
    </interactant>
    <organismsDiffer>false</organismsDiffer>
    <experiments>3</experiments>
</comment>
<comment type="interaction">
    <interactant intactId="EBI-947187">
        <id>Q9UHD9</id>
    </interactant>
    <interactant intactId="EBI-10210845">
        <id>P59990</id>
        <label>KRTAP12-1</label>
    </interactant>
    <organismsDiffer>false</organismsDiffer>
    <experiments>3</experiments>
</comment>
<comment type="interaction">
    <interactant intactId="EBI-947187">
        <id>Q9UHD9</id>
    </interactant>
    <interactant intactId="EBI-12020132">
        <id>Q7Z4W3</id>
        <label>KRTAP19-3</label>
    </interactant>
    <organismsDiffer>false</organismsDiffer>
    <experiments>3</experiments>
</comment>
<comment type="interaction">
    <interactant intactId="EBI-947187">
        <id>Q9UHD9</id>
    </interactant>
    <interactant intactId="EBI-1048945">
        <id>Q3LI72</id>
        <label>KRTAP19-5</label>
    </interactant>
    <organismsDiffer>false</organismsDiffer>
    <experiments>3</experiments>
</comment>
<comment type="interaction">
    <interactant intactId="EBI-947187">
        <id>Q9UHD9</id>
    </interactant>
    <interactant intactId="EBI-10250491">
        <id>Q6ISS4</id>
        <label>LAIR2</label>
    </interactant>
    <organismsDiffer>false</organismsDiffer>
    <experiments>3</experiments>
</comment>
<comment type="interaction">
    <interactant intactId="EBI-947187">
        <id>Q9UHD9</id>
    </interactant>
    <interactant intactId="EBI-9088686">
        <id>Q14847-2</id>
        <label>LASP1</label>
    </interactant>
    <organismsDiffer>false</organismsDiffer>
    <experiments>3</experiments>
</comment>
<comment type="interaction">
    <interactant intactId="EBI-947187">
        <id>Q9UHD9</id>
    </interactant>
    <interactant intactId="EBI-17978514">
        <id>O95835-2</id>
        <label>LATS1</label>
    </interactant>
    <organismsDiffer>false</organismsDiffer>
    <experiments>3</experiments>
</comment>
<comment type="interaction">
    <interactant intactId="EBI-947187">
        <id>Q9UHD9</id>
    </interactant>
    <interactant intactId="EBI-1052433">
        <id>P31025</id>
        <label>LCN1</label>
    </interactant>
    <organismsDiffer>false</organismsDiffer>
    <experiments>3</experiments>
</comment>
<comment type="interaction">
    <interactant intactId="EBI-947187">
        <id>Q9UHD9</id>
    </interactant>
    <interactant intactId="EBI-11911016">
        <id>P80188</id>
        <label>LCN2</label>
    </interactant>
    <organismsDiffer>false</organismsDiffer>
    <experiments>5</experiments>
</comment>
<comment type="interaction">
    <interactant intactId="EBI-947187">
        <id>Q9UHD9</id>
    </interactant>
    <interactant intactId="EBI-725647">
        <id>Q99732</id>
        <label>LITAF</label>
    </interactant>
    <organismsDiffer>false</organismsDiffer>
    <experiments>3</experiments>
</comment>
<comment type="interaction">
    <interactant intactId="EBI-947187">
        <id>Q9UHD9</id>
    </interactant>
    <interactant intactId="EBI-2798728">
        <id>P61968</id>
        <label>LMO4</label>
    </interactant>
    <organismsDiffer>false</organismsDiffer>
    <experiments>3</experiments>
</comment>
<comment type="interaction">
    <interactant intactId="EBI-947187">
        <id>Q9UHD9</id>
    </interactant>
    <interactant intactId="EBI-12382527">
        <id>O95868</id>
        <label>LY6G6D</label>
    </interactant>
    <organismsDiffer>false</organismsDiffer>
    <experiments>3</experiments>
</comment>
<comment type="interaction">
    <interactant intactId="EBI-947187">
        <id>Q9UHD9</id>
    </interactant>
    <interactant intactId="EBI-716006">
        <id>Q9Y5V3</id>
        <label>MAGED1</label>
    </interactant>
    <organismsDiffer>false</organismsDiffer>
    <experiments>3</experiments>
</comment>
<comment type="interaction">
    <interactant intactId="EBI-947187">
        <id>Q9UHD9</id>
    </interactant>
    <interactant intactId="EBI-5325353">
        <id>P11226</id>
        <label>MBL2</label>
    </interactant>
    <organismsDiffer>false</organismsDiffer>
    <experiments>5</experiments>
</comment>
<comment type="interaction">
    <interactant intactId="EBI-947187">
        <id>Q9UHD9</id>
    </interactant>
    <interactant intactId="EBI-722444">
        <id>P21741</id>
        <label>MDK</label>
    </interactant>
    <organismsDiffer>false</organismsDiffer>
    <experiments>3</experiments>
</comment>
<comment type="interaction">
    <interactant intactId="EBI-947187">
        <id>Q9UHD9</id>
    </interactant>
    <interactant intactId="EBI-740987">
        <id>Q9NQG6</id>
        <label>MIEF1</label>
    </interactant>
    <organismsDiffer>false</organismsDiffer>
    <experiments>3</experiments>
</comment>
<comment type="interaction">
    <interactant intactId="EBI-947187">
        <id>Q9UHD9</id>
    </interactant>
    <interactant intactId="EBI-11988931">
        <id>Q96C03-3</id>
        <label>MIEF2</label>
    </interactant>
    <organismsDiffer>false</organismsDiffer>
    <experiments>3</experiments>
</comment>
<comment type="interaction">
    <interactant intactId="EBI-947187">
        <id>Q9UHD9</id>
    </interactant>
    <interactant intactId="EBI-4290963">
        <id>Q9UNW1</id>
        <label>MINPP1</label>
    </interactant>
    <organismsDiffer>false</organismsDiffer>
    <experiments>3</experiments>
</comment>
<comment type="interaction">
    <interactant intactId="EBI-947187">
        <id>Q9UHD9</id>
    </interactant>
    <interactant intactId="EBI-739825">
        <id>Q96BY2</id>
        <label>MOAP1</label>
    </interactant>
    <organismsDiffer>false</organismsDiffer>
    <experiments>3</experiments>
</comment>
<comment type="interaction">
    <interactant intactId="EBI-947187">
        <id>Q9UHD9</id>
    </interactant>
    <interactant intactId="EBI-7415268">
        <id>O75431</id>
        <label>MTX2</label>
    </interactant>
    <organismsDiffer>false</organismsDiffer>
    <experiments>3</experiments>
</comment>
<comment type="interaction">
    <interactant intactId="EBI-947187">
        <id>Q9UHD9</id>
    </interactant>
    <interactant intactId="EBI-718622">
        <id>Q969H8</id>
        <label>MYDGF</label>
    </interactant>
    <organismsDiffer>false</organismsDiffer>
    <experiments>3</experiments>
</comment>
<comment type="interaction">
    <interactant intactId="EBI-947187">
        <id>Q9UHD9</id>
    </interactant>
    <interactant intactId="EBI-7950783">
        <id>Q96JP2</id>
        <label>MYO15B</label>
    </interactant>
    <organismsDiffer>false</organismsDiffer>
    <experiments>3</experiments>
</comment>
<comment type="interaction">
    <interactant intactId="EBI-947187">
        <id>Q9UHD9</id>
    </interactant>
    <interactant intactId="EBI-8650724">
        <id>Q8IW45</id>
        <label>NAXD</label>
    </interactant>
    <organismsDiffer>false</organismsDiffer>
    <experiments>3</experiments>
</comment>
<comment type="interaction">
    <interactant intactId="EBI-947187">
        <id>Q9UHD9</id>
    </interactant>
    <interactant intactId="EBI-12135485">
        <id>P41271-2</id>
        <label>NBL1</label>
    </interactant>
    <organismsDiffer>false</organismsDiffer>
    <experiments>3</experiments>
</comment>
<comment type="interaction">
    <interactant intactId="EBI-947187">
        <id>Q9UHD9</id>
    </interactant>
    <interactant intactId="EBI-10249760">
        <id>Q9UHB4</id>
        <label>NDOR1</label>
    </interactant>
    <organismsDiffer>false</organismsDiffer>
    <experiments>3</experiments>
</comment>
<comment type="interaction">
    <interactant intactId="EBI-947187">
        <id>Q9UHD9</id>
    </interactant>
    <interactant intactId="EBI-713684">
        <id>Q13232</id>
        <label>NME3</label>
    </interactant>
    <organismsDiffer>false</organismsDiffer>
    <experiments>3</experiments>
</comment>
<comment type="interaction">
    <interactant intactId="EBI-947187">
        <id>Q9UHD9</id>
    </interactant>
    <interactant intactId="EBI-395927">
        <id>Q9BVI4</id>
        <label>NOC4L</label>
    </interactant>
    <organismsDiffer>false</organismsDiffer>
    <experiments>3</experiments>
</comment>
<comment type="interaction">
    <interactant intactId="EBI-947187">
        <id>Q9UHD9</id>
    </interactant>
    <interactant intactId="EBI-740992">
        <id>O60936</id>
        <label>NOL3</label>
    </interactant>
    <organismsDiffer>false</organismsDiffer>
    <experiments>3</experiments>
</comment>
<comment type="interaction">
    <interactant intactId="EBI-947187">
        <id>Q9UHD9</id>
    </interactant>
    <interactant intactId="EBI-13061492">
        <id>P48145</id>
        <label>NPBWR1</label>
    </interactant>
    <organismsDiffer>false</organismsDiffer>
    <experiments>3</experiments>
</comment>
<comment type="interaction">
    <interactant intactId="EBI-947187">
        <id>Q9UHD9</id>
    </interactant>
    <interactant intactId="EBI-953859">
        <id>P01160</id>
        <label>NPPA</label>
    </interactant>
    <organismsDiffer>false</organismsDiffer>
    <experiments>3</experiments>
</comment>
<comment type="interaction">
    <interactant intactId="EBI-947187">
        <id>Q9UHD9</id>
    </interactant>
    <interactant intactId="EBI-1753111">
        <id>Q9HCQ7</id>
        <label>NPVF</label>
    </interactant>
    <organismsDiffer>false</organismsDiffer>
    <experiments>3</experiments>
</comment>
<comment type="interaction">
    <interactant intactId="EBI-947187">
        <id>Q9UHD9</id>
    </interactant>
    <interactant intactId="EBI-3905877">
        <id>P01303</id>
        <label>NPY</label>
    </interactant>
    <organismsDiffer>false</organismsDiffer>
    <experiments>3</experiments>
</comment>
<comment type="interaction">
    <interactant intactId="EBI-947187">
        <id>Q9UHD9</id>
    </interactant>
    <interactant intactId="EBI-13079132">
        <id>Q496H8</id>
        <label>NRN1L</label>
    </interactant>
    <organismsDiffer>false</organismsDiffer>
    <experiments>3</experiments>
</comment>
<comment type="interaction">
    <interactant intactId="EBI-947187">
        <id>Q9UHD9</id>
    </interactant>
    <interactant intactId="EBI-3918356">
        <id>Q9H0P0</id>
        <label>NT5C3A</label>
    </interactant>
    <organismsDiffer>false</organismsDiffer>
    <experiments>3</experiments>
</comment>
<comment type="interaction">
    <interactant intactId="EBI-947187">
        <id>Q9UHD9</id>
    </interactant>
    <interactant intactId="EBI-2811583">
        <id>Q9BVL2</id>
        <label>NUP58</label>
    </interactant>
    <organismsDiffer>false</organismsDiffer>
    <experiments>3</experiments>
</comment>
<comment type="interaction">
    <interactant intactId="EBI-947187">
        <id>Q9UHD9</id>
    </interactant>
    <interactant intactId="EBI-10239029">
        <id>Q17RF5</id>
        <label>ODAPH</label>
    </interactant>
    <organismsDiffer>false</organismsDiffer>
    <experiments>3</experiments>
</comment>
<comment type="interaction">
    <interactant intactId="EBI-947187">
        <id>Q9UHD9</id>
    </interactant>
    <interactant intactId="EBI-18058356">
        <id>Q9UHM6</id>
        <label>OPN4</label>
    </interactant>
    <organismsDiffer>false</organismsDiffer>
    <experiments>3</experiments>
</comment>
<comment type="interaction">
    <interactant intactId="EBI-947187">
        <id>Q9UHD9</id>
    </interactant>
    <interactant intactId="EBI-18164026">
        <id>Q8NG98</id>
        <label>OR7D4</label>
    </interactant>
    <organismsDiffer>false</organismsDiffer>
    <experiments>3</experiments>
</comment>
<comment type="interaction">
    <interactant intactId="EBI-947187">
        <id>Q9UHD9</id>
    </interactant>
    <interactant intactId="EBI-2804080">
        <id>Q99650</id>
        <label>OSMR</label>
    </interactant>
    <organismsDiffer>false</organismsDiffer>
    <experiments>3</experiments>
</comment>
<comment type="interaction">
    <interactant intactId="EBI-947187">
        <id>Q9UHD9</id>
    </interactant>
    <interactant intactId="EBI-12350959">
        <id>Q6UWI2</id>
        <label>PARM1</label>
    </interactant>
    <organismsDiffer>false</organismsDiffer>
    <experiments>3</experiments>
</comment>
<comment type="interaction">
    <interactant intactId="EBI-947187">
        <id>Q9UHD9</id>
    </interactant>
    <interactant intactId="EBI-12202741">
        <id>Q9Y5G4-2</id>
        <label>PCDHGA9</label>
    </interactant>
    <organismsDiffer>false</organismsDiffer>
    <experiments>3</experiments>
</comment>
<comment type="interaction">
    <interactant intactId="EBI-947187">
        <id>Q9UHD9</id>
    </interactant>
    <interactant intactId="EBI-12204277">
        <id>Q8IYJ0</id>
        <label>PIANP</label>
    </interactant>
    <organismsDiffer>false</organismsDiffer>
    <experiments>3</experiments>
</comment>
<comment type="interaction">
    <interactant intactId="EBI-947187">
        <id>Q9UHD9</id>
    </interactant>
    <interactant intactId="EBI-10285708">
        <id>Q96FE7</id>
        <label>PIK3IP1</label>
    </interactant>
    <organismsDiffer>false</organismsDiffer>
    <experiments>3</experiments>
</comment>
<comment type="interaction">
    <interactant intactId="EBI-947187">
        <id>Q9UHD9</id>
    </interactant>
    <interactant intactId="EBI-714158">
        <id>Q13526</id>
        <label>PIN1</label>
    </interactant>
    <organismsDiffer>false</organismsDiffer>
    <experiments>5</experiments>
</comment>
<comment type="interaction">
    <interactant intactId="EBI-947187">
        <id>Q9UHD9</id>
    </interactant>
    <interactant intactId="EBI-12253270">
        <id>Q9NWW9</id>
        <label>PLAAT2</label>
    </interactant>
    <organismsDiffer>false</organismsDiffer>
    <experiments>3</experiments>
</comment>
<comment type="interaction">
    <interactant intactId="EBI-947187">
        <id>Q9UHD9</id>
    </interactant>
    <interactant intactId="EBI-746318">
        <id>P53816</id>
        <label>PLAAT3</label>
    </interactant>
    <organismsDiffer>false</organismsDiffer>
    <experiments>3</experiments>
</comment>
<comment type="interaction">
    <interactant intactId="EBI-947187">
        <id>Q9UHD9</id>
    </interactant>
    <interactant intactId="EBI-373552">
        <id>Q96CS7</id>
        <label>PLEKHB2</label>
    </interactant>
    <organismsDiffer>false</organismsDiffer>
    <experiments>3</experiments>
</comment>
<comment type="interaction">
    <interactant intactId="EBI-947187">
        <id>Q9UHD9</id>
    </interactant>
    <interactant intactId="EBI-13318883">
        <id>Q969W9-2</id>
        <label>PMEPA1</label>
    </interactant>
    <organismsDiffer>false</organismsDiffer>
    <experiments>3</experiments>
</comment>
<comment type="interaction">
    <interactant intactId="EBI-947187">
        <id>Q9UHD9</id>
    </interactant>
    <interactant intactId="EBI-11278955">
        <id>Q9UL41</id>
        <label>PNMA3</label>
    </interactant>
    <organismsDiffer>false</organismsDiffer>
    <experiments>3</experiments>
</comment>
<comment type="interaction">
    <interactant intactId="EBI-947187">
        <id>Q9UHD9</id>
    </interactant>
    <interactant intactId="EBI-12407415">
        <id>O00592-2</id>
        <label>PODXL</label>
    </interactant>
    <organismsDiffer>false</organismsDiffer>
    <experiments>5</experiments>
</comment>
<comment type="interaction">
    <interactant intactId="EBI-947187">
        <id>Q9UHD9</id>
    </interactant>
    <interactant intactId="EBI-713847">
        <id>P56282</id>
        <label>POLE2</label>
    </interactant>
    <organismsDiffer>false</organismsDiffer>
    <experiments>3</experiments>
</comment>
<comment type="interaction">
    <interactant intactId="EBI-947187">
        <id>Q9UHD9</id>
    </interactant>
    <interactant intactId="EBI-11956563">
        <id>Q96HA1-2</id>
        <label>POM121</label>
    </interactant>
    <organismsDiffer>false</organismsDiffer>
    <experiments>3</experiments>
</comment>
<comment type="interaction">
    <interactant intactId="EBI-947187">
        <id>Q9UHD9</id>
    </interactant>
    <interactant intactId="EBI-359252">
        <id>P23284</id>
        <label>PPIB</label>
    </interactant>
    <organismsDiffer>false</organismsDiffer>
    <experiments>5</experiments>
</comment>
<comment type="interaction">
    <interactant intactId="EBI-947187">
        <id>Q9UHD9</id>
    </interactant>
    <interactant intactId="EBI-953909">
        <id>P45877</id>
        <label>PPIC</label>
    </interactant>
    <organismsDiffer>false</organismsDiffer>
    <experiments>5</experiments>
</comment>
<comment type="interaction">
    <interactant intactId="EBI-947187">
        <id>Q9UHD9</id>
    </interactant>
    <interactant intactId="EBI-1055615">
        <id>O43447</id>
        <label>PPIH</label>
    </interactant>
    <organismsDiffer>false</organismsDiffer>
    <experiments>3</experiments>
</comment>
<comment type="interaction">
    <interactant intactId="EBI-947187">
        <id>Q9UHD9</id>
    </interactant>
    <interactant intactId="EBI-2116102">
        <id>Q96NZ9</id>
        <label>PRAP1</label>
    </interactant>
    <organismsDiffer>false</organismsDiffer>
    <experiments>6</experiments>
</comment>
<comment type="interaction">
    <interactant intactId="EBI-947187">
        <id>Q9UHD9</id>
    </interactant>
    <interactant intactId="EBI-738624">
        <id>Q16378</id>
        <label>PRR4</label>
    </interactant>
    <organismsDiffer>false</organismsDiffer>
    <experiments>6</experiments>
</comment>
<comment type="interaction">
    <interactant intactId="EBI-947187">
        <id>Q9UHD9</id>
    </interactant>
    <interactant intactId="EBI-357648">
        <id>Q13200</id>
        <label>PSMD2</label>
    </interactant>
    <organismsDiffer>false</organismsDiffer>
    <experiments>3</experiments>
</comment>
<comment type="interaction">
    <interactant intactId="EBI-947187">
        <id>Q9UHD9</id>
    </interactant>
    <interactant intactId="EBI-11974061">
        <id>Q9UIG4</id>
        <label>PSORS1C2</label>
    </interactant>
    <organismsDiffer>false</organismsDiffer>
    <experiments>3</experiments>
</comment>
<comment type="interaction">
    <interactant intactId="EBI-947187">
        <id>Q9UHD9</id>
    </interactant>
    <interactant intactId="EBI-948821">
        <id>P41222</id>
        <label>PTGDS</label>
    </interactant>
    <organismsDiffer>false</organismsDiffer>
    <experiments>6</experiments>
</comment>
<comment type="interaction">
    <interactant intactId="EBI-947187">
        <id>Q9UHD9</id>
    </interactant>
    <interactant intactId="EBI-2856807">
        <id>Q16769</id>
        <label>QPCT</label>
    </interactant>
    <organismsDiffer>false</organismsDiffer>
    <experiments>3</experiments>
</comment>
<comment type="interaction">
    <interactant intactId="EBI-947187">
        <id>Q9UHD9</id>
    </interactant>
    <interactant intactId="EBI-746453">
        <id>P54725</id>
        <label>RAD23A</label>
    </interactant>
    <organismsDiffer>false</organismsDiffer>
    <experiments>6</experiments>
</comment>
<comment type="interaction">
    <interactant intactId="EBI-947187">
        <id>Q9UHD9</id>
    </interactant>
    <interactant intactId="EBI-954531">
        <id>P54727</id>
        <label>RAD23B</label>
    </interactant>
    <organismsDiffer>false</organismsDiffer>
    <experiments>3</experiments>
</comment>
<comment type="interaction">
    <interactant intactId="EBI-947187">
        <id>Q9UHD9</id>
    </interactant>
    <interactant intactId="EBI-11963050">
        <id>O43251-10</id>
        <label>RBFOX2</label>
    </interactant>
    <organismsDiffer>false</organismsDiffer>
    <experiments>3</experiments>
</comment>
<comment type="interaction">
    <interactant intactId="EBI-947187">
        <id>Q9UHD9</id>
    </interactant>
    <interactant intactId="EBI-12224445">
        <id>Q9BX46-2</id>
        <label>RBM24</label>
    </interactant>
    <organismsDiffer>false</organismsDiffer>
    <experiments>3</experiments>
</comment>
<comment type="interaction">
    <interactant intactId="EBI-947187">
        <id>Q9UHD9</id>
    </interactant>
    <interactant intactId="EBI-396669">
        <id>Q9Y3C5</id>
        <label>RNF11</label>
    </interactant>
    <organismsDiffer>false</organismsDiffer>
    <experiments>4</experiments>
</comment>
<comment type="interaction">
    <interactant intactId="EBI-947187">
        <id>Q9UHD9</id>
    </interactant>
    <interactant intactId="EBI-2341619">
        <id>Q8TEB7</id>
        <label>RNF128</label>
    </interactant>
    <organismsDiffer>false</organismsDiffer>
    <experiments>3</experiments>
</comment>
<comment type="interaction">
    <interactant intactId="EBI-947187">
        <id>Q9UHD9</id>
    </interactant>
    <interactant intactId="EBI-751555">
        <id>Q9H0X6</id>
        <label>RNF208</label>
    </interactant>
    <organismsDiffer>false</organismsDiffer>
    <experiments>6</experiments>
</comment>
<comment type="interaction">
    <interactant intactId="EBI-947187">
        <id>Q9UHD9</id>
    </interactant>
    <interactant intactId="EBI-2340927">
        <id>P78317</id>
        <label>RNF4</label>
    </interactant>
    <organismsDiffer>false</organismsDiffer>
    <experiments>3</experiments>
</comment>
<comment type="interaction">
    <interactant intactId="EBI-947187">
        <id>Q9UHD9</id>
    </interactant>
    <interactant intactId="EBI-357375">
        <id>P62979</id>
        <label>RPS27A</label>
    </interactant>
    <organismsDiffer>false</organismsDiffer>
    <experiments>3</experiments>
</comment>
<comment type="interaction">
    <interactant intactId="EBI-947187">
        <id>Q9UHD9</id>
    </interactant>
    <interactant intactId="EBI-953753">
        <id>Q7L4I2</id>
        <label>RSRC2</label>
    </interactant>
    <organismsDiffer>false</organismsDiffer>
    <experiments>3</experiments>
</comment>
<comment type="interaction">
    <interactant intactId="EBI-947187">
        <id>Q9UHD9</id>
    </interactant>
    <interactant intactId="EBI-741643">
        <id>Q9BWD3</id>
        <label>RTL8A</label>
    </interactant>
    <organismsDiffer>false</organismsDiffer>
    <experiments>3</experiments>
</comment>
<comment type="interaction">
    <interactant intactId="EBI-947187">
        <id>Q9UHD9</id>
    </interactant>
    <interactant intactId="EBI-10238588">
        <id>Q17RB0</id>
        <label>RTL8B</label>
    </interactant>
    <organismsDiffer>false</organismsDiffer>
    <experiments>3</experiments>
</comment>
<comment type="interaction">
    <interactant intactId="EBI-947187">
        <id>Q9UHD9</id>
    </interactant>
    <interactant intactId="EBI-10174072">
        <id>A6ZKI3</id>
        <label>RTL8C</label>
    </interactant>
    <organismsDiffer>false</organismsDiffer>
    <experiments>5</experiments>
</comment>
<comment type="interaction">
    <interactant intactId="EBI-947187">
        <id>Q9UHD9</id>
    </interactant>
    <interactant intactId="EBI-722635">
        <id>P05408</id>
        <label>SCG5</label>
    </interactant>
    <organismsDiffer>false</organismsDiffer>
    <experiments>3</experiments>
</comment>
<comment type="interaction">
    <interactant intactId="EBI-947187">
        <id>Q9UHD9</id>
    </interactant>
    <interactant intactId="EBI-12019232">
        <id>Q4G0G5</id>
        <label>SCGB2B2</label>
    </interactant>
    <organismsDiffer>false</organismsDiffer>
    <experiments>3</experiments>
</comment>
<comment type="interaction">
    <interactant intactId="EBI-947187">
        <id>Q9UHD9</id>
    </interactant>
    <interactant intactId="EBI-12272118">
        <id>P04279-2</id>
        <label>SEMG1</label>
    </interactant>
    <organismsDiffer>false</organismsDiffer>
    <experiments>3</experiments>
</comment>
<comment type="interaction">
    <interactant intactId="EBI-947187">
        <id>Q9UHD9</id>
    </interactant>
    <interactant intactId="EBI-953978">
        <id>P05121</id>
        <label>SERPINE1</label>
    </interactant>
    <organismsDiffer>false</organismsDiffer>
    <experiments>3</experiments>
</comment>
<comment type="interaction">
    <interactant intactId="EBI-947187">
        <id>Q9UHD9</id>
    </interactant>
    <interactant intactId="EBI-750144">
        <id>O75830</id>
        <label>SERPINI2</label>
    </interactant>
    <organismsDiffer>false</organismsDiffer>
    <experiments>3</experiments>
</comment>
<comment type="interaction">
    <interactant intactId="EBI-947187">
        <id>Q9UHD9</id>
    </interactant>
    <interactant intactId="EBI-723710">
        <id>Q53EL9</id>
        <label>SEZ6</label>
    </interactant>
    <organismsDiffer>false</organismsDiffer>
    <experiments>3</experiments>
</comment>
<comment type="interaction">
    <interactant intactId="EBI-947187">
        <id>Q9UHD9</id>
    </interactant>
    <interactant intactId="EBI-12012146">
        <id>Q9BYH1-5</id>
        <label>SEZ6L</label>
    </interactant>
    <organismsDiffer>false</organismsDiffer>
    <experiments>3</experiments>
</comment>
<comment type="interaction">
    <interactant intactId="EBI-947187">
        <id>Q9UHD9</id>
    </interactant>
    <interactant intactId="EBI-12350685">
        <id>Q8IWL1</id>
        <label>SFTPA2</label>
    </interactant>
    <organismsDiffer>false</organismsDiffer>
    <experiments>6</experiments>
</comment>
<comment type="interaction">
    <interactant intactId="EBI-947187">
        <id>Q9UHD9</id>
    </interactant>
    <interactant intactId="EBI-347996">
        <id>O43765</id>
        <label>SGTA</label>
    </interactant>
    <organismsDiffer>false</organismsDiffer>
    <experiments>3</experiments>
</comment>
<comment type="interaction">
    <interactant intactId="EBI-947187">
        <id>Q9UHD9</id>
    </interactant>
    <interactant intactId="EBI-7600166">
        <id>O15427</id>
        <label>SLC16A3</label>
    </interactant>
    <organismsDiffer>false</organismsDiffer>
    <experiments>3</experiments>
</comment>
<comment type="interaction">
    <interactant intactId="EBI-947187">
        <id>Q9UHD9</id>
    </interactant>
    <interactant intactId="EBI-7137880">
        <id>Q96PX8</id>
        <label>SLITRK1</label>
    </interactant>
    <organismsDiffer>false</organismsDiffer>
    <experiments>3</experiments>
</comment>
<comment type="interaction">
    <interactant intactId="EBI-947187">
        <id>Q9UHD9</id>
    </interactant>
    <interactant intactId="EBI-355293">
        <id>P03973</id>
        <label>SLPI</label>
    </interactant>
    <organismsDiffer>false</organismsDiffer>
    <experiments>3</experiments>
</comment>
<comment type="interaction">
    <interactant intactId="EBI-947187">
        <id>Q9UHD9</id>
    </interactant>
    <interactant intactId="EBI-1051936">
        <id>P58511</id>
        <label>SMIM11</label>
    </interactant>
    <organismsDiffer>false</organismsDiffer>
    <experiments>3</experiments>
</comment>
<comment type="interaction">
    <interactant intactId="EBI-947187">
        <id>Q9UHD9</id>
    </interactant>
    <interactant intactId="EBI-17657124">
        <id>Q96E16</id>
        <label>SMIM19</label>
    </interactant>
    <organismsDiffer>false</organismsDiffer>
    <experiments>3</experiments>
</comment>
<comment type="interaction">
    <interactant intactId="EBI-947187">
        <id>Q9UHD9</id>
    </interactant>
    <interactant intactId="EBI-10300146">
        <id>Q9BVW6</id>
        <label>SMIM2</label>
    </interactant>
    <organismsDiffer>false</organismsDiffer>
    <experiments>3</experiments>
</comment>
<comment type="interaction">
    <interactant intactId="EBI-947187">
        <id>Q9UHD9</id>
    </interactant>
    <interactant intactId="EBI-738612">
        <id>P02814</id>
        <label>SMR3B</label>
    </interactant>
    <organismsDiffer>false</organismsDiffer>
    <experiments>3</experiments>
</comment>
<comment type="interaction">
    <interactant intactId="EBI-947187">
        <id>Q9UHD9</id>
    </interactant>
    <interactant intactId="EBI-372475">
        <id>P14678-2</id>
        <label>SNRPB</label>
    </interactant>
    <organismsDiffer>false</organismsDiffer>
    <experiments>3</experiments>
</comment>
<comment type="interaction">
    <interactant intactId="EBI-947187">
        <id>Q9UHD9</id>
    </interactant>
    <interactant intactId="EBI-10195782">
        <id>P08294</id>
        <label>SOD3</label>
    </interactant>
    <organismsDiffer>false</organismsDiffer>
    <experiments>3</experiments>
</comment>
<comment type="interaction">
    <interactant intactId="EBI-947187">
        <id>Q9UHD9</id>
    </interactant>
    <interactant intactId="EBI-14835966">
        <id>Q08648-4</id>
        <label>SPAG11B</label>
    </interactant>
    <organismsDiffer>false</organismsDiffer>
    <experiments>3</experiments>
</comment>
<comment type="interaction">
    <interactant intactId="EBI-947187">
        <id>Q9UHD9</id>
    </interactant>
    <interactant intactId="EBI-12078338">
        <id>O43278-2</id>
        <label>SPINT1</label>
    </interactant>
    <organismsDiffer>false</organismsDiffer>
    <experiments>3</experiments>
</comment>
<comment type="interaction">
    <interactant intactId="EBI-947187">
        <id>Q9UHD9</id>
    </interactant>
    <interactant intactId="EBI-10049055">
        <id>P16150</id>
        <label>SPN</label>
    </interactant>
    <organismsDiffer>false</organismsDiffer>
    <experiments>3</experiments>
</comment>
<comment type="interaction">
    <interactant intactId="EBI-947187">
        <id>Q9UHD9</id>
    </interactant>
    <interactant intactId="EBI-744915">
        <id>P10124</id>
        <label>SRGN</label>
    </interactant>
    <organismsDiffer>false</organismsDiffer>
    <experiments>3</experiments>
</comment>
<comment type="interaction">
    <interactant intactId="EBI-947187">
        <id>Q9UHD9</id>
    </interactant>
    <interactant intactId="EBI-12210563">
        <id>Q9UHB9-2</id>
        <label>SRP68</label>
    </interactant>
    <organismsDiffer>false</organismsDiffer>
    <experiments>3</experiments>
</comment>
<comment type="interaction">
    <interactant intactId="EBI-947187">
        <id>Q9UHD9</id>
    </interactant>
    <interactant intactId="EBI-373258">
        <id>O75886</id>
        <label>STAM2</label>
    </interactant>
    <organismsDiffer>false</organismsDiffer>
    <experiments>3</experiments>
</comment>
<comment type="interaction">
    <interactant intactId="EBI-947187">
        <id>Q9UHD9</id>
    </interactant>
    <interactant intactId="EBI-3921347">
        <id>P51687</id>
        <label>SUOX</label>
    </interactant>
    <organismsDiffer>false</organismsDiffer>
    <experiments>3</experiments>
</comment>
<comment type="interaction">
    <interactant intactId="EBI-947187">
        <id>Q9UHD9</id>
    </interactant>
    <interactant intactId="EBI-12017810">
        <id>Q5VX71-3</id>
        <label>SUSD4</label>
    </interactant>
    <organismsDiffer>false</organismsDiffer>
    <experiments>3</experiments>
</comment>
<comment type="interaction">
    <interactant intactId="EBI-947187">
        <id>Q9UHD9</id>
    </interactant>
    <interactant intactId="EBI-752030">
        <id>Q96A09</id>
        <label>TENT5B</label>
    </interactant>
    <organismsDiffer>false</organismsDiffer>
    <experiments>3</experiments>
</comment>
<comment type="interaction">
    <interactant intactId="EBI-947187">
        <id>Q9UHD9</id>
    </interactant>
    <interactant intactId="EBI-10224676">
        <id>Q07654</id>
        <label>TFF3</label>
    </interactant>
    <organismsDiffer>false</organismsDiffer>
    <experiments>3</experiments>
</comment>
<comment type="interaction">
    <interactant intactId="EBI-947187">
        <id>Q9UHD9</id>
    </interactant>
    <interactant intactId="EBI-6570759">
        <id>Q9BVV7</id>
        <label>TIMM21</label>
    </interactant>
    <organismsDiffer>false</organismsDiffer>
    <experiments>3</experiments>
</comment>
<comment type="interaction">
    <interactant intactId="EBI-947187">
        <id>Q9UHD9</id>
    </interactant>
    <interactant intactId="EBI-1033507">
        <id>P16035</id>
        <label>TIMP2</label>
    </interactant>
    <organismsDiffer>false</organismsDiffer>
    <experiments>3</experiments>
</comment>
<comment type="interaction">
    <interactant intactId="EBI-947187">
        <id>Q9UHD9</id>
    </interactant>
    <interactant intactId="EBI-749248">
        <id>Q8N131</id>
        <label>TMEM123</label>
    </interactant>
    <organismsDiffer>false</organismsDiffer>
    <experiments>3</experiments>
</comment>
<comment type="interaction">
    <interactant intactId="EBI-947187">
        <id>Q9UHD9</id>
    </interactant>
    <interactant intactId="EBI-12197205">
        <id>Q9Y5U5-2</id>
        <label>TNFRSF18</label>
    </interactant>
    <organismsDiffer>false</organismsDiffer>
    <experiments>3</experiments>
</comment>
<comment type="interaction">
    <interactant intactId="EBI-947187">
        <id>Q9UHD9</id>
    </interactant>
    <interactant intactId="EBI-11954062">
        <id>Q6UXN7</id>
        <label>TOMM20L</label>
    </interactant>
    <organismsDiffer>false</organismsDiffer>
    <experiments>3</experiments>
</comment>
<comment type="interaction">
    <interactant intactId="EBI-947187">
        <id>Q9UHD9</id>
    </interactant>
    <interactant intactId="EBI-3650647">
        <id>Q9BUZ4</id>
        <label>TRAF4</label>
    </interactant>
    <organismsDiffer>false</organismsDiffer>
    <experiments>3</experiments>
</comment>
<comment type="interaction">
    <interactant intactId="EBI-947187">
        <id>Q9UHD9</id>
    </interactant>
    <interactant intactId="EBI-742790">
        <id>Q13049</id>
        <label>TRIM32</label>
    </interactant>
    <organismsDiffer>false</organismsDiffer>
    <experiments>3</experiments>
</comment>
<comment type="interaction">
    <interactant intactId="EBI-947187">
        <id>Q9UHD9</id>
    </interactant>
    <interactant intactId="EBI-2564581">
        <id>O95881</id>
        <label>TXNDC12</label>
    </interactant>
    <organismsDiffer>false</organismsDiffer>
    <experiments>3</experiments>
</comment>
<comment type="interaction">
    <interactant intactId="EBI-947187">
        <id>Q9UHD9</id>
    </interactant>
    <interactant intactId="EBI-2510815">
        <id>Q8NBS9</id>
        <label>TXNDC5</label>
    </interactant>
    <organismsDiffer>false</organismsDiffer>
    <experiments>3</experiments>
</comment>
<comment type="interaction">
    <interactant intactId="EBI-947187">
        <id>Q9UHD9</id>
    </interactant>
    <interactant intactId="EBI-350510">
        <id>Q9BZF9</id>
        <label>UACA</label>
    </interactant>
    <organismsDiffer>false</organismsDiffer>
    <experiments>3</experiments>
</comment>
<comment type="interaction">
    <interactant intactId="EBI-947187">
        <id>Q9UHD9</id>
    </interactant>
    <interactant intactId="EBI-357304">
        <id>P62987</id>
        <label>UBA52</label>
    </interactant>
    <organismsDiffer>false</organismsDiffer>
    <experiments>3</experiments>
</comment>
<comment type="interaction">
    <interactant intactId="EBI-947187">
        <id>Q9UHD9</id>
    </interactant>
    <interactant intactId="EBI-749370">
        <id>Q9BSL1</id>
        <label>UBAC1</label>
    </interactant>
    <organismsDiffer>false</organismsDiffer>
    <experiments>3</experiments>
</comment>
<comment type="interaction">
    <interactant intactId="EBI-947187">
        <id>Q9UHD9</id>
    </interactant>
    <interactant intactId="EBI-413034">
        <id>P0CG47</id>
        <label>UBB</label>
    </interactant>
    <organismsDiffer>false</organismsDiffer>
    <experiments>3</experiments>
</comment>
<comment type="interaction">
    <interactant intactId="EBI-947187">
        <id>Q9UHD9</id>
    </interactant>
    <interactant intactId="EBI-3390054">
        <id>P0CG48</id>
        <label>UBC</label>
    </interactant>
    <organismsDiffer>false</organismsDiffer>
    <experiments>3</experiments>
</comment>
<comment type="interaction">
    <interactant intactId="EBI-947187">
        <id>Q9UHD9</id>
    </interactant>
    <interactant intactId="EBI-10180829">
        <id>Q7KZS0</id>
        <label>UBE2I</label>
    </interactant>
    <organismsDiffer>false</organismsDiffer>
    <experiments>3</experiments>
</comment>
<comment type="interaction">
    <interactant intactId="EBI-947187">
        <id>Q9UHD9</id>
    </interactant>
    <interactant intactId="EBI-1050671">
        <id>Q13404</id>
        <label>UBE2V1</label>
    </interactant>
    <organismsDiffer>false</organismsDiffer>
    <experiments>3</experiments>
</comment>
<comment type="interaction">
    <interactant intactId="EBI-947187">
        <id>Q9UHD9</id>
    </interactant>
    <interactant intactId="EBI-741480">
        <id>Q9UMX0</id>
        <label>UBQLN1</label>
    </interactant>
    <organismsDiffer>false</organismsDiffer>
    <experiments>3</experiments>
</comment>
<comment type="interaction">
    <interactant intactId="EBI-947187">
        <id>Q9UHD9</id>
    </interactant>
    <interactant intactId="EBI-947187">
        <id>Q9UHD9</id>
        <label>UBQLN2</label>
    </interactant>
    <organismsDiffer>false</organismsDiffer>
    <experiments>3</experiments>
</comment>
<comment type="interaction">
    <interactant intactId="EBI-947187">
        <id>Q9UHD9</id>
    </interactant>
    <interactant intactId="EBI-11530712">
        <id>Q04323-2</id>
        <label>UBXN1</label>
    </interactant>
    <organismsDiffer>false</organismsDiffer>
    <experiments>3</experiments>
</comment>
<comment type="interaction">
    <interactant intactId="EBI-947187">
        <id>Q9UHD9</id>
    </interactant>
    <interactant intactId="EBI-1993627">
        <id>O94888</id>
        <label>UBXN7</label>
    </interactant>
    <organismsDiffer>false</organismsDiffer>
    <experiments>3</experiments>
</comment>
<comment type="interaction">
    <interactant intactId="EBI-947187">
        <id>Q9UHD9</id>
    </interactant>
    <interactant intactId="EBI-12068150">
        <id>Q6NVU6</id>
        <label>UFSP1</label>
    </interactant>
    <organismsDiffer>false</organismsDiffer>
    <experiments>3</experiments>
</comment>
<comment type="interaction">
    <interactant intactId="EBI-947187">
        <id>Q9UHD9</id>
    </interactant>
    <interactant intactId="EBI-10191303">
        <id>O95231</id>
        <label>VENTX</label>
    </interactant>
    <organismsDiffer>false</organismsDiffer>
    <experiments>3</experiments>
</comment>
<comment type="interaction">
    <interactant intactId="EBI-947187">
        <id>Q9UHD9</id>
    </interactant>
    <interactant intactId="EBI-12320391">
        <id>P01282-2</id>
        <label>VIP</label>
    </interactant>
    <organismsDiffer>false</organismsDiffer>
    <experiments>3</experiments>
</comment>
<comment type="interaction">
    <interactant intactId="EBI-947187">
        <id>Q9UHD9</id>
    </interactant>
    <interactant intactId="EBI-1036653">
        <id>P04004</id>
        <label>VTN</label>
    </interactant>
    <organismsDiffer>false</organismsDiffer>
    <experiments>3</experiments>
</comment>
<comment type="interaction">
    <interactant intactId="EBI-947187">
        <id>Q9UHD9</id>
    </interactant>
    <interactant intactId="EBI-11957238">
        <id>Q2TAL6</id>
        <label>VWC2</label>
    </interactant>
    <organismsDiffer>false</organismsDiffer>
    <experiments>3</experiments>
</comment>
<comment type="interaction">
    <interactant intactId="EBI-947187">
        <id>Q9UHD9</id>
    </interactant>
    <interactant intactId="EBI-10261124">
        <id>Q8IUB3</id>
        <label>WFDC10B</label>
    </interactant>
    <organismsDiffer>false</organismsDiffer>
    <experiments>3</experiments>
</comment>
<comment type="interaction">
    <interactant intactId="EBI-947187">
        <id>Q9UHD9</id>
    </interactant>
    <interactant intactId="EBI-11958577">
        <id>Q8WWY7</id>
        <label>WFDC12</label>
    </interactant>
    <organismsDiffer>false</organismsDiffer>
    <experiments>6</experiments>
</comment>
<comment type="interaction">
    <interactant intactId="EBI-947187">
        <id>Q9UHD9</id>
    </interactant>
    <interactant intactId="EBI-3921109">
        <id>Q8N6M9</id>
        <label>ZFAND2A</label>
    </interactant>
    <organismsDiffer>false</organismsDiffer>
    <experiments>3</experiments>
</comment>
<comment type="interaction">
    <interactant intactId="EBI-947187">
        <id>Q9UHD9</id>
    </interactant>
    <interactant intactId="EBI-747823">
        <id>Q8WV99</id>
        <label>ZFAND2B</label>
    </interactant>
    <organismsDiffer>false</organismsDiffer>
    <experiments>3</experiments>
</comment>
<comment type="interaction">
    <interactant intactId="EBI-947187">
        <id>Q9UHD9</id>
    </interactant>
    <interactant intactId="EBI-746479">
        <id>O60844</id>
        <label>ZG16</label>
    </interactant>
    <organismsDiffer>false</organismsDiffer>
    <experiments>3</experiments>
</comment>
<comment type="interaction">
    <interactant intactId="EBI-947187">
        <id>Q9UHD9</id>
    </interactant>
    <interactant intactId="EBI-953824">
        <id>Q96DA0</id>
        <label>ZG16B</label>
    </interactant>
    <organismsDiffer>false</organismsDiffer>
    <experiments>6</experiments>
</comment>
<comment type="interaction">
    <interactant intactId="EBI-947187">
        <id>Q9UHD9</id>
    </interactant>
    <interactant intactId="EBI-747343">
        <id>O95201</id>
        <label>ZNF205</label>
    </interactant>
    <organismsDiffer>false</organismsDiffer>
    <experiments>3</experiments>
</comment>
<comment type="interaction">
    <interactant intactId="EBI-947187">
        <id>Q9UHD9</id>
    </interactant>
    <interactant intactId="EBI-17234977">
        <id>A0A1U9X8X8</id>
    </interactant>
    <organismsDiffer>false</organismsDiffer>
    <experiments>6</experiments>
</comment>
<comment type="interaction">
    <interactant intactId="EBI-947187">
        <id>Q9UHD9</id>
    </interactant>
    <interactant intactId="EBI-2857623">
        <id>Q96FB2</id>
    </interactant>
    <organismsDiffer>false</organismsDiffer>
    <experiments>3</experiments>
</comment>
<comment type="interaction">
    <interactant intactId="EBI-947187">
        <id>Q9UHD9</id>
    </interactant>
    <interactant intactId="EBI-25475897">
        <id>P0DTC6</id>
        <label>6</label>
    </interactant>
    <organismsDiffer>true</organismsDiffer>
    <experiments>4</experiments>
</comment>
<comment type="interaction">
    <interactant intactId="EBI-947187">
        <id>Q9UHD9</id>
    </interactant>
    <interactant intactId="EBI-25475917">
        <id>P0DTD3</id>
        <label>9c</label>
    </interactant>
    <organismsDiffer>true</organismsDiffer>
    <experiments>4</experiments>
</comment>
<comment type="interaction">
    <interactant intactId="EBI-947187">
        <id>Q9UHD9</id>
    </interactant>
    <interactant intactId="EBI-7710745">
        <id>O48726</id>
        <label>RPN13</label>
    </interactant>
    <organismsDiffer>true</organismsDiffer>
    <experiments>4</experiments>
</comment>
<comment type="subcellular location">
    <subcellularLocation>
        <location evidence="10">Cytoplasm</location>
    </subcellularLocation>
    <subcellularLocation>
        <location evidence="23">Nucleus</location>
    </subcellularLocation>
    <subcellularLocation>
        <location evidence="1">Membrane</location>
    </subcellularLocation>
    <subcellularLocation>
        <location evidence="12">Cytoplasmic vesicle</location>
        <location evidence="12">Autophagosome</location>
    </subcellularLocation>
    <text evidence="7">Colocalizes with a subset of proteasomes, namely those that are cytoskeleton associated or free in the cytosol. Associated with fibers in mitotic cells.</text>
</comment>
<comment type="induction">
    <text>Highly expressed in mitotic cells from metaphase to telophase. Expression in non-mitotic cells is very low.</text>
</comment>
<comment type="domain">
    <text evidence="10 24">The ubiquitin-like domain is essential for its inhibitory effect on GPCR endocytosis. Mediates its association with the subunits of the proteasome.</text>
</comment>
<comment type="domain">
    <text evidence="12 24">The UBA domain is essential for its association with microtubule-associated protein 1 light chain 3 (MAP1LC3). Mediates its association with ubiquitinated substrates.</text>
</comment>
<comment type="domain">
    <text evidence="8">Dimerization is dependent upon the central region of the protein containing the STI1 domains and is independent of its ubiquitin-like and UBA domains.</text>
</comment>
<comment type="PTM">
    <text evidence="13">Degraded during macroautophagy.</text>
</comment>
<comment type="disease" evidence="14 15 16 17 20 22">
    <disease id="DI-03271">
        <name>Amyotrophic lateral sclerosis 15, with or without frontotemporal dementia</name>
        <acronym>ALS15</acronym>
        <description>A neurodegenerative disorder affecting upper motor neurons in the brain and lower motor neurons in the brain stem and spinal cord, resulting in fatal paralysis. Sensory abnormalities are absent. The pathologic hallmarks of the disease include pallor of the corticospinal tract due to loss of motor neurons, presence of ubiquitin-positive inclusions within surviving motor neurons, and deposition of pathologic aggregates. The etiology of amyotrophic lateral sclerosis is likely to be multifactorial, involving both genetic and environmental factors. The disease is inherited in 5-10% of the cases. Patients with ALS15 may develop frontotemporal dementia.</description>
        <dbReference type="MIM" id="300857"/>
    </disease>
    <text>The disease is caused by variants affecting the gene represented in this entry.</text>
</comment>
<gene>
    <name type="primary">UBQLN2</name>
    <name type="synonym">N4BP4</name>
    <name type="synonym">PLIC2</name>
    <name type="ORF">HRIHFB2157</name>
</gene>
<evidence type="ECO:0000250" key="1">
    <source>
        <dbReference type="UniProtKB" id="Q9QZM0"/>
    </source>
</evidence>
<evidence type="ECO:0000255" key="2"/>
<evidence type="ECO:0000255" key="3">
    <source>
        <dbReference type="PROSITE-ProRule" id="PRU00212"/>
    </source>
</evidence>
<evidence type="ECO:0000255" key="4">
    <source>
        <dbReference type="PROSITE-ProRule" id="PRU00214"/>
    </source>
</evidence>
<evidence type="ECO:0000256" key="5">
    <source>
        <dbReference type="SAM" id="MobiDB-lite"/>
    </source>
</evidence>
<evidence type="ECO:0000269" key="6">
    <source>
    </source>
</evidence>
<evidence type="ECO:0000269" key="7">
    <source>
    </source>
</evidence>
<evidence type="ECO:0000269" key="8">
    <source>
    </source>
</evidence>
<evidence type="ECO:0000269" key="9">
    <source>
    </source>
</evidence>
<evidence type="ECO:0000269" key="10">
    <source>
    </source>
</evidence>
<evidence type="ECO:0000269" key="11">
    <source>
    </source>
</evidence>
<evidence type="ECO:0000269" key="12">
    <source>
    </source>
</evidence>
<evidence type="ECO:0000269" key="13">
    <source>
    </source>
</evidence>
<evidence type="ECO:0000269" key="14">
    <source>
    </source>
</evidence>
<evidence type="ECO:0000269" key="15">
    <source>
    </source>
</evidence>
<evidence type="ECO:0000269" key="16">
    <source>
    </source>
</evidence>
<evidence type="ECO:0000269" key="17">
    <source>
    </source>
</evidence>
<evidence type="ECO:0000269" key="18">
    <source>
    </source>
</evidence>
<evidence type="ECO:0000269" key="19">
    <source>
    </source>
</evidence>
<evidence type="ECO:0000269" key="20">
    <source>
    </source>
</evidence>
<evidence type="ECO:0000269" key="21">
    <source>
    </source>
</evidence>
<evidence type="ECO:0000269" key="22">
    <source>
    </source>
</evidence>
<evidence type="ECO:0000269" key="23">
    <source>
    </source>
</evidence>
<evidence type="ECO:0000303" key="24">
    <source>
    </source>
</evidence>
<evidence type="ECO:0000305" key="25"/>
<evidence type="ECO:0007744" key="26">
    <source>
    </source>
</evidence>
<evidence type="ECO:0007744" key="27">
    <source>
    </source>
</evidence>
<evidence type="ECO:0007829" key="28">
    <source>
        <dbReference type="PDB" id="1J8C"/>
    </source>
</evidence>
<evidence type="ECO:0007829" key="29">
    <source>
        <dbReference type="PDB" id="7F7X"/>
    </source>
</evidence>